<reference key="1">
    <citation type="journal article" date="1996" name="Arch. Virol.">
        <title>Full-length genomic sequence of a hepatitis C virus genotype 2c isolate (BEBE1) and the 2c-specific PCR primers.</title>
        <authorList>
            <person name="Nakao H."/>
            <person name="Okamoto H."/>
            <person name="Tokita H."/>
            <person name="Inoue T."/>
            <person name="Iizuka H."/>
            <person name="Pozzato G."/>
            <person name="Mishiro S."/>
        </authorList>
    </citation>
    <scope>NUCLEOTIDE SEQUENCE [GENOMIC RNA]</scope>
</reference>
<reference key="2">
    <citation type="journal article" date="2000" name="J. Viral Hepat.">
        <title>Properties of the hepatitis C virus core protein: a structural protein that modulates cellular processes.</title>
        <authorList>
            <person name="McLauchlan J."/>
        </authorList>
    </citation>
    <scope>REVIEW</scope>
</reference>
<reference key="3">
    <citation type="journal article" date="2004" name="Hepatology">
        <title>Structural biology of hepatitis C virus.</title>
        <authorList>
            <person name="Penin F."/>
            <person name="Dubuisson J."/>
            <person name="Rey F.A."/>
            <person name="Moradpour D."/>
            <person name="Pawlotsky J.-M."/>
        </authorList>
    </citation>
    <scope>REVIEW</scope>
</reference>
<organism>
    <name type="scientific">Hepatitis C virus genotype 2c (isolate BEBE1)</name>
    <name type="common">HCV</name>
    <dbReference type="NCBI Taxonomy" id="356413"/>
    <lineage>
        <taxon>Viruses</taxon>
        <taxon>Riboviria</taxon>
        <taxon>Orthornavirae</taxon>
        <taxon>Kitrinoviricota</taxon>
        <taxon>Flasuviricetes</taxon>
        <taxon>Amarillovirales</taxon>
        <taxon>Flaviviridae</taxon>
        <taxon>Hepacivirus</taxon>
        <taxon>Hepacivirus hominis</taxon>
    </lineage>
</organism>
<protein>
    <recommendedName>
        <fullName>Genome polyprotein</fullName>
    </recommendedName>
    <component>
        <recommendedName>
            <fullName>Core protein precursor</fullName>
        </recommendedName>
        <alternativeName>
            <fullName>Capsid protein C</fullName>
        </alternativeName>
        <alternativeName>
            <fullName>p23</fullName>
        </alternativeName>
    </component>
    <component>
        <recommendedName>
            <fullName>Mature core protein</fullName>
        </recommendedName>
        <alternativeName>
            <fullName>p21</fullName>
        </alternativeName>
    </component>
    <component>
        <recommendedName>
            <fullName>Envelope glycoprotein E1</fullName>
        </recommendedName>
        <alternativeName>
            <fullName>gp32</fullName>
        </alternativeName>
        <alternativeName>
            <fullName>gp35</fullName>
        </alternativeName>
    </component>
    <component>
        <recommendedName>
            <fullName>Envelope glycoprotein E2</fullName>
        </recommendedName>
        <alternativeName>
            <fullName>NS1</fullName>
        </alternativeName>
        <alternativeName>
            <fullName>gp68</fullName>
        </alternativeName>
        <alternativeName>
            <fullName>gp70</fullName>
        </alternativeName>
    </component>
    <component>
        <recommendedName>
            <fullName>Viroporin p7</fullName>
        </recommendedName>
    </component>
    <component>
        <recommendedName>
            <fullName>Protease NS2</fullName>
            <shortName>p23</shortName>
            <ecNumber evidence="3">3.4.22.-</ecNumber>
        </recommendedName>
        <alternativeName>
            <fullName>Non-structural protein 2</fullName>
            <shortName>NS2</shortName>
        </alternativeName>
    </component>
    <component>
        <recommendedName>
            <fullName>Serine protease/helicase NS3</fullName>
            <ecNumber evidence="5">3.4.21.98</ecNumber>
            <ecNumber evidence="5">3.6.1.15</ecNumber>
            <ecNumber evidence="5">3.6.4.13</ecNumber>
        </recommendedName>
        <alternativeName>
            <fullName>Hepacivirin</fullName>
        </alternativeName>
        <alternativeName>
            <fullName evidence="5">NS3 helicase</fullName>
        </alternativeName>
        <alternativeName>
            <fullName evidence="5">NS3 protease</fullName>
        </alternativeName>
        <alternativeName>
            <fullName>NS3P</fullName>
        </alternativeName>
        <alternativeName>
            <fullName>Viroporin p70</fullName>
        </alternativeName>
    </component>
    <component>
        <recommendedName>
            <fullName>Non-structural protein 4A</fullName>
            <shortName>NS4A</shortName>
        </recommendedName>
        <alternativeName>
            <fullName>p8</fullName>
        </alternativeName>
    </component>
    <component>
        <recommendedName>
            <fullName>Non-structural protein 4B</fullName>
            <shortName>NS4B</shortName>
        </recommendedName>
        <alternativeName>
            <fullName>p27</fullName>
        </alternativeName>
    </component>
    <component>
        <recommendedName>
            <fullName>Non-structural protein 5A</fullName>
            <shortName>NS5A</shortName>
        </recommendedName>
        <alternativeName>
            <fullName>p56/58</fullName>
        </alternativeName>
    </component>
    <component>
        <recommendedName>
            <fullName>RNA-directed RNA polymerase</fullName>
            <ecNumber evidence="5">2.7.7.48</ecNumber>
        </recommendedName>
        <alternativeName>
            <fullName>NS5B</fullName>
        </alternativeName>
        <alternativeName>
            <fullName>p68</fullName>
        </alternativeName>
    </component>
</protein>
<evidence type="ECO:0000250" key="1">
    <source>
        <dbReference type="UniProtKB" id="O92972"/>
    </source>
</evidence>
<evidence type="ECO:0000250" key="2">
    <source>
        <dbReference type="UniProtKB" id="P26662"/>
    </source>
</evidence>
<evidence type="ECO:0000250" key="3">
    <source>
        <dbReference type="UniProtKB" id="P26663"/>
    </source>
</evidence>
<evidence type="ECO:0000250" key="4">
    <source>
        <dbReference type="UniProtKB" id="P26664"/>
    </source>
</evidence>
<evidence type="ECO:0000250" key="5">
    <source>
        <dbReference type="UniProtKB" id="P27958"/>
    </source>
</evidence>
<evidence type="ECO:0000250" key="6">
    <source>
        <dbReference type="UniProtKB" id="P29846"/>
    </source>
</evidence>
<evidence type="ECO:0000250" key="7">
    <source>
        <dbReference type="UniProtKB" id="Q01403"/>
    </source>
</evidence>
<evidence type="ECO:0000250" key="8">
    <source>
        <dbReference type="UniProtKB" id="Q03463"/>
    </source>
</evidence>
<evidence type="ECO:0000250" key="9">
    <source>
        <dbReference type="UniProtKB" id="Q5EG65"/>
    </source>
</evidence>
<evidence type="ECO:0000250" key="10">
    <source>
        <dbReference type="UniProtKB" id="Q913V3"/>
    </source>
</evidence>
<evidence type="ECO:0000250" key="11">
    <source>
        <dbReference type="UniProtKB" id="Q99IB8"/>
    </source>
</evidence>
<evidence type="ECO:0000250" key="12">
    <source>
        <dbReference type="UniProtKB" id="Q9WMX2"/>
    </source>
</evidence>
<evidence type="ECO:0000255" key="13"/>
<evidence type="ECO:0000255" key="14">
    <source>
        <dbReference type="PROSITE-ProRule" id="PRU00539"/>
    </source>
</evidence>
<evidence type="ECO:0000255" key="15">
    <source>
        <dbReference type="PROSITE-ProRule" id="PRU00541"/>
    </source>
</evidence>
<evidence type="ECO:0000255" key="16">
    <source>
        <dbReference type="PROSITE-ProRule" id="PRU01030"/>
    </source>
</evidence>
<evidence type="ECO:0000255" key="17">
    <source>
        <dbReference type="PROSITE-ProRule" id="PRU01166"/>
    </source>
</evidence>
<evidence type="ECO:0000256" key="18">
    <source>
        <dbReference type="SAM" id="MobiDB-lite"/>
    </source>
</evidence>
<evidence type="ECO:0000305" key="19"/>
<dbReference type="EC" id="3.4.22.-" evidence="3"/>
<dbReference type="EC" id="3.4.21.98" evidence="5"/>
<dbReference type="EC" id="3.6.1.15" evidence="5"/>
<dbReference type="EC" id="3.6.4.13" evidence="5"/>
<dbReference type="EC" id="2.7.7.48" evidence="5"/>
<dbReference type="EMBL" id="D50409">
    <property type="protein sequence ID" value="BAA08911.1"/>
    <property type="molecule type" value="Genomic_RNA"/>
</dbReference>
<dbReference type="SMR" id="Q68749"/>
<dbReference type="MEROPS" id="S29.001"/>
<dbReference type="euHCVdb" id="D50409"/>
<dbReference type="Proteomes" id="UP000007412">
    <property type="component" value="Genome"/>
</dbReference>
<dbReference type="GO" id="GO:0044167">
    <property type="term" value="C:host cell endoplasmic reticulum membrane"/>
    <property type="evidence" value="ECO:0007669"/>
    <property type="project" value="UniProtKB-SubCell"/>
</dbReference>
<dbReference type="GO" id="GO:0044186">
    <property type="term" value="C:host cell lipid droplet"/>
    <property type="evidence" value="ECO:0007669"/>
    <property type="project" value="UniProtKB-SubCell"/>
</dbReference>
<dbReference type="GO" id="GO:0044191">
    <property type="term" value="C:host cell mitochondrial membrane"/>
    <property type="evidence" value="ECO:0007669"/>
    <property type="project" value="UniProtKB-SubCell"/>
</dbReference>
<dbReference type="GO" id="GO:0042025">
    <property type="term" value="C:host cell nucleus"/>
    <property type="evidence" value="ECO:0007669"/>
    <property type="project" value="UniProtKB-SubCell"/>
</dbReference>
<dbReference type="GO" id="GO:0044220">
    <property type="term" value="C:host cell perinuclear region of cytoplasm"/>
    <property type="evidence" value="ECO:0007669"/>
    <property type="project" value="UniProtKB-SubCell"/>
</dbReference>
<dbReference type="GO" id="GO:0020002">
    <property type="term" value="C:host cell plasma membrane"/>
    <property type="evidence" value="ECO:0007669"/>
    <property type="project" value="UniProtKB-SubCell"/>
</dbReference>
<dbReference type="GO" id="GO:0016020">
    <property type="term" value="C:membrane"/>
    <property type="evidence" value="ECO:0007669"/>
    <property type="project" value="UniProtKB-KW"/>
</dbReference>
<dbReference type="GO" id="GO:1990904">
    <property type="term" value="C:ribonucleoprotein complex"/>
    <property type="evidence" value="ECO:0007669"/>
    <property type="project" value="UniProtKB-KW"/>
</dbReference>
<dbReference type="GO" id="GO:0019031">
    <property type="term" value="C:viral envelope"/>
    <property type="evidence" value="ECO:0007669"/>
    <property type="project" value="UniProtKB-KW"/>
</dbReference>
<dbReference type="GO" id="GO:0019013">
    <property type="term" value="C:viral nucleocapsid"/>
    <property type="evidence" value="ECO:0007669"/>
    <property type="project" value="UniProtKB-KW"/>
</dbReference>
<dbReference type="GO" id="GO:0055036">
    <property type="term" value="C:virion membrane"/>
    <property type="evidence" value="ECO:0007669"/>
    <property type="project" value="UniProtKB-SubCell"/>
</dbReference>
<dbReference type="GO" id="GO:0005524">
    <property type="term" value="F:ATP binding"/>
    <property type="evidence" value="ECO:0007669"/>
    <property type="project" value="UniProtKB-KW"/>
</dbReference>
<dbReference type="GO" id="GO:0016887">
    <property type="term" value="F:ATP hydrolysis activity"/>
    <property type="evidence" value="ECO:0007669"/>
    <property type="project" value="RHEA"/>
</dbReference>
<dbReference type="GO" id="GO:0015267">
    <property type="term" value="F:channel activity"/>
    <property type="evidence" value="ECO:0007669"/>
    <property type="project" value="UniProtKB-KW"/>
</dbReference>
<dbReference type="GO" id="GO:0004197">
    <property type="term" value="F:cysteine-type endopeptidase activity"/>
    <property type="evidence" value="ECO:0007669"/>
    <property type="project" value="InterPro"/>
</dbReference>
<dbReference type="GO" id="GO:0003723">
    <property type="term" value="F:RNA binding"/>
    <property type="evidence" value="ECO:0007669"/>
    <property type="project" value="UniProtKB-KW"/>
</dbReference>
<dbReference type="GO" id="GO:0003724">
    <property type="term" value="F:RNA helicase activity"/>
    <property type="evidence" value="ECO:0007669"/>
    <property type="project" value="UniProtKB-EC"/>
</dbReference>
<dbReference type="GO" id="GO:0003968">
    <property type="term" value="F:RNA-directed RNA polymerase activity"/>
    <property type="evidence" value="ECO:0007669"/>
    <property type="project" value="UniProtKB-KW"/>
</dbReference>
<dbReference type="GO" id="GO:0004252">
    <property type="term" value="F:serine-type endopeptidase activity"/>
    <property type="evidence" value="ECO:0007669"/>
    <property type="project" value="InterPro"/>
</dbReference>
<dbReference type="GO" id="GO:0017124">
    <property type="term" value="F:SH3 domain binding"/>
    <property type="evidence" value="ECO:0007669"/>
    <property type="project" value="UniProtKB-KW"/>
</dbReference>
<dbReference type="GO" id="GO:0005198">
    <property type="term" value="F:structural molecule activity"/>
    <property type="evidence" value="ECO:0007669"/>
    <property type="project" value="InterPro"/>
</dbReference>
<dbReference type="GO" id="GO:0008270">
    <property type="term" value="F:zinc ion binding"/>
    <property type="evidence" value="ECO:0007669"/>
    <property type="project" value="InterPro"/>
</dbReference>
<dbReference type="GO" id="GO:0075512">
    <property type="term" value="P:clathrin-dependent endocytosis of virus by host cell"/>
    <property type="evidence" value="ECO:0007669"/>
    <property type="project" value="UniProtKB-KW"/>
</dbReference>
<dbReference type="GO" id="GO:0039654">
    <property type="term" value="P:fusion of virus membrane with host endosome membrane"/>
    <property type="evidence" value="ECO:0007669"/>
    <property type="project" value="UniProtKB-KW"/>
</dbReference>
<dbReference type="GO" id="GO:0034220">
    <property type="term" value="P:monoatomic ion transmembrane transport"/>
    <property type="evidence" value="ECO:0007669"/>
    <property type="project" value="UniProtKB-KW"/>
</dbReference>
<dbReference type="GO" id="GO:0006508">
    <property type="term" value="P:proteolysis"/>
    <property type="evidence" value="ECO:0007669"/>
    <property type="project" value="UniProtKB-KW"/>
</dbReference>
<dbReference type="GO" id="GO:0039520">
    <property type="term" value="P:symbiont-mediated activation of host autophagy"/>
    <property type="evidence" value="ECO:0007669"/>
    <property type="project" value="UniProtKB-KW"/>
</dbReference>
<dbReference type="GO" id="GO:0039645">
    <property type="term" value="P:symbiont-mediated perturbation of host cell cycle G1/S transition checkpoint"/>
    <property type="evidence" value="ECO:0007669"/>
    <property type="project" value="UniProtKB-KW"/>
</dbReference>
<dbReference type="GO" id="GO:0039545">
    <property type="term" value="P:symbiont-mediated suppression of host cytoplasmic pattern recognition receptor signaling pathway via inhibition of MAVS activity"/>
    <property type="evidence" value="ECO:0007669"/>
    <property type="project" value="UniProtKB-KW"/>
</dbReference>
<dbReference type="GO" id="GO:0039563">
    <property type="term" value="P:symbiont-mediated suppression of host JAK-STAT cascade via inhibition of STAT1 activity"/>
    <property type="evidence" value="ECO:0007669"/>
    <property type="project" value="UniProtKB-KW"/>
</dbReference>
<dbReference type="GO" id="GO:0039527">
    <property type="term" value="P:symbiont-mediated suppression of host TRAF-mediated signal transduction"/>
    <property type="evidence" value="ECO:0007669"/>
    <property type="project" value="UniProtKB-KW"/>
</dbReference>
<dbReference type="GO" id="GO:0039502">
    <property type="term" value="P:symbiont-mediated suppression of host type I interferon-mediated signaling pathway"/>
    <property type="evidence" value="ECO:0007669"/>
    <property type="project" value="UniProtKB-KW"/>
</dbReference>
<dbReference type="GO" id="GO:0019087">
    <property type="term" value="P:symbiont-mediated transformation of host cell"/>
    <property type="evidence" value="ECO:0007669"/>
    <property type="project" value="InterPro"/>
</dbReference>
<dbReference type="GO" id="GO:0039694">
    <property type="term" value="P:viral RNA genome replication"/>
    <property type="evidence" value="ECO:0007669"/>
    <property type="project" value="InterPro"/>
</dbReference>
<dbReference type="GO" id="GO:0019062">
    <property type="term" value="P:virion attachment to host cell"/>
    <property type="evidence" value="ECO:0007669"/>
    <property type="project" value="UniProtKB-KW"/>
</dbReference>
<dbReference type="CDD" id="cd20903">
    <property type="entry name" value="HCV_p7"/>
    <property type="match status" value="1"/>
</dbReference>
<dbReference type="CDD" id="cd23202">
    <property type="entry name" value="Hepacivirus_RdRp"/>
    <property type="match status" value="1"/>
</dbReference>
<dbReference type="FunFam" id="1.10.820.10:FF:000001">
    <property type="entry name" value="Genome polyprotein"/>
    <property type="match status" value="1"/>
</dbReference>
<dbReference type="FunFam" id="2.30.30.710:FF:000001">
    <property type="entry name" value="Genome polyprotein"/>
    <property type="match status" value="1"/>
</dbReference>
<dbReference type="FunFam" id="3.30.160.890:FF:000001">
    <property type="entry name" value="Genome polyprotein"/>
    <property type="match status" value="1"/>
</dbReference>
<dbReference type="FunFam" id="3.30.70.270:FF:000015">
    <property type="entry name" value="Genome polyprotein"/>
    <property type="match status" value="1"/>
</dbReference>
<dbReference type="FunFam" id="3.40.50.300:FF:000557">
    <property type="entry name" value="Genome polyprotein"/>
    <property type="match status" value="1"/>
</dbReference>
<dbReference type="FunFam" id="3.40.50.300:FF:000717">
    <property type="entry name" value="Genome polyprotein"/>
    <property type="match status" value="1"/>
</dbReference>
<dbReference type="FunFam" id="4.10.710.10:FF:000001">
    <property type="entry name" value="Genome polyprotein"/>
    <property type="match status" value="1"/>
</dbReference>
<dbReference type="Gene3D" id="2.40.10.120">
    <property type="match status" value="1"/>
</dbReference>
<dbReference type="Gene3D" id="3.30.70.270">
    <property type="match status" value="2"/>
</dbReference>
<dbReference type="Gene3D" id="6.10.250.1610">
    <property type="match status" value="1"/>
</dbReference>
<dbReference type="Gene3D" id="6.10.250.1750">
    <property type="match status" value="1"/>
</dbReference>
<dbReference type="Gene3D" id="6.10.250.2920">
    <property type="match status" value="1"/>
</dbReference>
<dbReference type="Gene3D" id="2.20.25.210">
    <property type="entry name" value="Hepatitis C NS5A, domain 1B"/>
    <property type="match status" value="1"/>
</dbReference>
<dbReference type="Gene3D" id="4.10.710.10">
    <property type="entry name" value="Hepatitis C Virus Capsid Protein, Chain A"/>
    <property type="match status" value="1"/>
</dbReference>
<dbReference type="Gene3D" id="3.30.160.890">
    <property type="entry name" value="Hepatitis C virus envelope glycoprotein E1, chain C"/>
    <property type="match status" value="1"/>
</dbReference>
<dbReference type="Gene3D" id="2.30.30.710">
    <property type="entry name" value="Hepatitis C virus non-structural protein NS2, C-terminal domain"/>
    <property type="match status" value="1"/>
</dbReference>
<dbReference type="Gene3D" id="1.20.1280.150">
    <property type="entry name" value="Hepatitis C virus non-structural protein NS2, N-terminal domain"/>
    <property type="match status" value="1"/>
</dbReference>
<dbReference type="Gene3D" id="2.20.25.220">
    <property type="entry name" value="Hepatitis C virus NS5A, 1B domain"/>
    <property type="match status" value="1"/>
</dbReference>
<dbReference type="Gene3D" id="3.40.50.300">
    <property type="entry name" value="P-loop containing nucleotide triphosphate hydrolases"/>
    <property type="match status" value="2"/>
</dbReference>
<dbReference type="Gene3D" id="1.10.820.10">
    <property type="entry name" value="RNA Helicase Chain A , domain 3"/>
    <property type="match status" value="1"/>
</dbReference>
<dbReference type="Gene3D" id="2.40.10.10">
    <property type="entry name" value="Trypsin-like serine proteases"/>
    <property type="match status" value="1"/>
</dbReference>
<dbReference type="InterPro" id="IPR043502">
    <property type="entry name" value="DNA/RNA_pol_sf"/>
</dbReference>
<dbReference type="InterPro" id="IPR011492">
    <property type="entry name" value="Flavi_DEAD"/>
</dbReference>
<dbReference type="InterPro" id="IPR002521">
    <property type="entry name" value="HCV_Core_C"/>
</dbReference>
<dbReference type="InterPro" id="IPR044896">
    <property type="entry name" value="HCV_core_chain_A"/>
</dbReference>
<dbReference type="InterPro" id="IPR002522">
    <property type="entry name" value="HCV_core_N"/>
</dbReference>
<dbReference type="InterPro" id="IPR002519">
    <property type="entry name" value="HCV_Env"/>
</dbReference>
<dbReference type="InterPro" id="IPR002531">
    <property type="entry name" value="HCV_NS1"/>
</dbReference>
<dbReference type="InterPro" id="IPR002518">
    <property type="entry name" value="HCV_NS2"/>
</dbReference>
<dbReference type="InterPro" id="IPR042205">
    <property type="entry name" value="HCV_NS2_C"/>
</dbReference>
<dbReference type="InterPro" id="IPR042209">
    <property type="entry name" value="HCV_NS2_N"/>
</dbReference>
<dbReference type="InterPro" id="IPR000745">
    <property type="entry name" value="HCV_NS4a"/>
</dbReference>
<dbReference type="InterPro" id="IPR001490">
    <property type="entry name" value="HCV_NS4b"/>
</dbReference>
<dbReference type="InterPro" id="IPR002868">
    <property type="entry name" value="HCV_NS5a"/>
</dbReference>
<dbReference type="InterPro" id="IPR013192">
    <property type="entry name" value="HCV_NS5A_1a"/>
</dbReference>
<dbReference type="InterPro" id="IPR013193">
    <property type="entry name" value="HCV_NS5a_1B_dom"/>
</dbReference>
<dbReference type="InterPro" id="IPR038568">
    <property type="entry name" value="HCV_NS5A_1B_sf"/>
</dbReference>
<dbReference type="InterPro" id="IPR024350">
    <property type="entry name" value="HCV_NS5a_C"/>
</dbReference>
<dbReference type="InterPro" id="IPR049913">
    <property type="entry name" value="HCV_p7"/>
</dbReference>
<dbReference type="InterPro" id="IPR014001">
    <property type="entry name" value="Helicase_ATP-bd"/>
</dbReference>
<dbReference type="InterPro" id="IPR001650">
    <property type="entry name" value="Helicase_C-like"/>
</dbReference>
<dbReference type="InterPro" id="IPR004109">
    <property type="entry name" value="HepC_NS3_protease"/>
</dbReference>
<dbReference type="InterPro" id="IPR054175">
    <property type="entry name" value="NS3_helicase_C"/>
</dbReference>
<dbReference type="InterPro" id="IPR038170">
    <property type="entry name" value="NS5A_1a_sf"/>
</dbReference>
<dbReference type="InterPro" id="IPR027417">
    <property type="entry name" value="P-loop_NTPase"/>
</dbReference>
<dbReference type="InterPro" id="IPR009003">
    <property type="entry name" value="Peptidase_S1_PA"/>
</dbReference>
<dbReference type="InterPro" id="IPR043504">
    <property type="entry name" value="Peptidase_S1_PA_chymotrypsin"/>
</dbReference>
<dbReference type="InterPro" id="IPR043128">
    <property type="entry name" value="Rev_trsase/Diguanyl_cyclase"/>
</dbReference>
<dbReference type="InterPro" id="IPR007094">
    <property type="entry name" value="RNA-dir_pol_PSvirus"/>
</dbReference>
<dbReference type="InterPro" id="IPR002166">
    <property type="entry name" value="RNA_pol_HCV"/>
</dbReference>
<dbReference type="Pfam" id="PF07652">
    <property type="entry name" value="Flavi_DEAD"/>
    <property type="match status" value="1"/>
</dbReference>
<dbReference type="Pfam" id="PF01543">
    <property type="entry name" value="HCV_capsid"/>
    <property type="match status" value="1"/>
</dbReference>
<dbReference type="Pfam" id="PF01542">
    <property type="entry name" value="HCV_core"/>
    <property type="match status" value="1"/>
</dbReference>
<dbReference type="Pfam" id="PF01539">
    <property type="entry name" value="HCV_env"/>
    <property type="match status" value="1"/>
</dbReference>
<dbReference type="Pfam" id="PF01560">
    <property type="entry name" value="HCV_NS1"/>
    <property type="match status" value="1"/>
</dbReference>
<dbReference type="Pfam" id="PF01538">
    <property type="entry name" value="HCV_NS2"/>
    <property type="match status" value="1"/>
</dbReference>
<dbReference type="Pfam" id="PF01006">
    <property type="entry name" value="HCV_NS4a"/>
    <property type="match status" value="1"/>
</dbReference>
<dbReference type="Pfam" id="PF01001">
    <property type="entry name" value="HCV_NS4b"/>
    <property type="match status" value="1"/>
</dbReference>
<dbReference type="Pfam" id="PF01506">
    <property type="entry name" value="HCV_NS5a"/>
    <property type="match status" value="1"/>
</dbReference>
<dbReference type="Pfam" id="PF08300">
    <property type="entry name" value="HCV_NS5a_1a"/>
    <property type="match status" value="1"/>
</dbReference>
<dbReference type="Pfam" id="PF08301">
    <property type="entry name" value="HCV_NS5a_1b"/>
    <property type="match status" value="1"/>
</dbReference>
<dbReference type="Pfam" id="PF12941">
    <property type="entry name" value="HCV_NS5a_C"/>
    <property type="match status" value="1"/>
</dbReference>
<dbReference type="Pfam" id="PF22027">
    <property type="entry name" value="NS3_helicase_C"/>
    <property type="match status" value="1"/>
</dbReference>
<dbReference type="Pfam" id="PF02907">
    <property type="entry name" value="Peptidase_S29"/>
    <property type="match status" value="1"/>
</dbReference>
<dbReference type="Pfam" id="PF00998">
    <property type="entry name" value="RdRP_3"/>
    <property type="match status" value="1"/>
</dbReference>
<dbReference type="SMART" id="SM00487">
    <property type="entry name" value="DEXDc"/>
    <property type="match status" value="1"/>
</dbReference>
<dbReference type="SUPFAM" id="SSF56672">
    <property type="entry name" value="DNA/RNA polymerases"/>
    <property type="match status" value="1"/>
</dbReference>
<dbReference type="SUPFAM" id="SSF52540">
    <property type="entry name" value="P-loop containing nucleoside triphosphate hydrolases"/>
    <property type="match status" value="2"/>
</dbReference>
<dbReference type="SUPFAM" id="SSF50494">
    <property type="entry name" value="Trypsin-like serine proteases"/>
    <property type="match status" value="1"/>
</dbReference>
<dbReference type="PROSITE" id="PS51693">
    <property type="entry name" value="HCV_NS2_PRO"/>
    <property type="match status" value="1"/>
</dbReference>
<dbReference type="PROSITE" id="PS51192">
    <property type="entry name" value="HELICASE_ATP_BIND_1"/>
    <property type="match status" value="1"/>
</dbReference>
<dbReference type="PROSITE" id="PS51194">
    <property type="entry name" value="HELICASE_CTER"/>
    <property type="match status" value="1"/>
</dbReference>
<dbReference type="PROSITE" id="PS51822">
    <property type="entry name" value="HV_PV_NS3_PRO"/>
    <property type="match status" value="1"/>
</dbReference>
<dbReference type="PROSITE" id="PS50507">
    <property type="entry name" value="RDRP_SSRNA_POS"/>
    <property type="match status" value="1"/>
</dbReference>
<name>POLG_HCVBB</name>
<accession>Q68749</accession>
<proteinExistence type="inferred from homology"/>
<organismHost>
    <name type="scientific">Homo sapiens</name>
    <name type="common">Human</name>
    <dbReference type="NCBI Taxonomy" id="9606"/>
</organismHost>
<comment type="function">
    <molecule>Mature core protein</molecule>
    <text evidence="2 4 5 6 11 19">Packages viral RNA to form a viral nucleocapsid, and promotes virion budding (Probable). Participates in the viral particle production as a result of its interaction with the non-structural protein 5A (By similarity). Binds RNA and may function as a RNA chaperone to induce the RNA structural rearrangements taking place during virus replication (By similarity). Modulates viral translation initiation by interacting with viral IRES and 40S ribosomal subunit (By similarity). Affects various cell signaling pathways, host immunity and lipid metabolism (Probable). Prevents the establishment of cellular antiviral state by blocking the interferon-alpha/beta (IFN-alpha/beta) and IFN-gamma signaling pathways and by blocking the formation of phosphorylated STAT1 and promoting ubiquitin-mediated proteasome-dependent degradation of STAT1 (By similarity). Activates STAT3 leading to cellular transformation (By similarity). Regulates the activity of cellular genes, including c-myc and c-fos (By similarity). May repress the promoter of p53, and sequester CREB3 and SP110 isoform 3/Sp110b in the cytoplasm (By similarity). Represses cell cycle negative regulating factor CDKN1A, thereby interrupting an important check point of normal cell cycle regulation (By similarity). Targets transcription factors involved in the regulation of inflammatory responses and in the immune response: suppresses TNF-induced NF-kappa-B activation, and activates AP-1 (By similarity). Binds to dendritic cells (DCs) via C1QR1, resulting in down-regulation of T-lymphocytes proliferation (By similarity). Alters lipid metabolism by interacting with hepatocellular proteins involved in lipid accumulation and storage (By similarity). Induces up-regulation of FAS promoter activity, and thereby contributes to the increased triglyceride accumulation in hepatocytes (steatosis) (By similarity).</text>
</comment>
<comment type="function">
    <molecule>Envelope glycoprotein E1</molecule>
    <text evidence="5">Forms a heterodimer with envelope glycoprotein E2, which mediates virus attachment to the host cell, virion internalization through clathrin-dependent endocytosis and fusion with host membrane (By similarity). Fusion with the host cell is most likely mediated by both E1 and E2, through conformational rearrangements of the heterodimer required for fusion rather than a classical class II fusion mechanism (By similarity). E1/E2 heterodimer binds host apolipoproteins such as APOB and ApoE thereby forming a lipo-viro-particle (LVP) (By similarity). APOE associated to the LVP allows the initial virus attachment to cell surface receptors such as the heparan sulfate proteoglycans (HSPGs), syndecan-1 (SDC1), syndecan-1 (SDC2), the low-density lipoprotein receptor (LDLR) and scavenger receptor class B type I (SCARB1) (By similarity). The cholesterol transfer activity of SCARB1 allows E2 exposure and binding of E2 to SCARB1 and the tetraspanin CD81 (By similarity). E1/E2 heterodimer binding on CD81 activates the epithelial growth factor receptor (EGFR) signaling pathway (By similarity). Diffusion of the complex E1-E2-EGFR-SCARB1-CD81 to the cell lateral membrane allows further interaction with Claudin 1 (CLDN1) and occludin (OCLN) to finally trigger HCV entry (By similarity).</text>
</comment>
<comment type="function">
    <molecule>Envelope glycoprotein E2</molecule>
    <text evidence="4 5">Forms a heterodimer with envelope glycoprotein E1, which mediates virus attachment to the host cell, virion internalization through clathrin-dependent endocytosis and fusion with host membrane (By similarity). Fusion with the host cell is most likely mediated by both E1 and E2, through conformational rearrangements of the heterodimer required for fusion rather than a classical class II fusion mechanism (By similarity). The interaction between envelope glycoprotein E2 and host apolipoprotein E/APOE allows the proper assembly, maturation and infectivity of the viral particles (By similarity). This interaction is probably promoted via the up-regulation of cellular autophagy by the virus (By similarity). E1/E2 heterodimer binds host apolipoproteins such as APOB and APOE thereby forming a lipo-viro-particle (LVP) (By similarity). APOE associated to the LVP allows the initial virus attachment to cell surface receptors such as the heparan sulfate proteoglycans (HSPGs), syndecan-1 (SDC1), syndecan-1 (SDC2), the low-density lipoprotein receptor (LDLR) and scavenger receptor class B type I (SCARB1) (By similarity). The cholesterol transfer activity of SCARB1 allows E2 exposure and binding of E2 to SCARB1 and the tetraspanin CD81 (By similarity). E1/E2 heterodimer binding on CD81 activates the epithelial growth factor receptor (EGFR) signaling pathway (By similarity). Diffusion of the complex E1-E2-EGFR-SCARB1-CD81 to the cell lateral membrane allows further interaction with Claudin 1 (CLDN1) and occludin (OCLN) to finally trigger HCV entry (By similarity). Inhibits host EIF2AK2/PKR activation, preventing the establishment of an antiviral state (By similarity). Viral ligand for CD209/DC-SIGN and CLEC4M/DC-SIGNR, which are respectively found on dendritic cells (DCs), and on liver sinusoidal endothelial cells and macrophage-like cells of lymph node sinuses (By similarity). These interactions allow the capture of circulating HCV particles by these cells and subsequent facilitated transmission to permissive cells such as hepatocytes and lymphocyte subpopulations (By similarity). The interaction between E2 and host amino acid transporter complex formed by SLC3A2 and SLC7A5/LAT1 may facilitate viral entry into host cell (By similarity).</text>
</comment>
<comment type="function">
    <molecule>Viroporin p7</molecule>
    <text evidence="5 11 19">Ion channel protein that acts as a viroporin and plays an essential role in the assembly, envelopment and secretion of viral particles (By similarity). Regulates the host cell secretory pathway, which induces the intracellular retention of viral glycoproteins and favors assembly of viral particles (By similarity). Creates a pore in acidic organelles and releases Ca(2+) and H(+) in the cytoplasm of infected cells, leading to a productive viral infection (By similarity). High levels of cytoplasmic Ca(2+) may trigger membrane trafficking and transport of viral ER-associated proteins to viroplasms, sites of viral genome replication (Probable). This ionic imbalance induces the assembly of the inflammasome complex, which triggers the maturation of pro-IL-1beta into IL-1beta through the action of caspase-1 (By similarity). Targets also host mitochondria and induces mitochondrial depolarization (By similarity). In addition of its role as a viroporin, acts as a lipid raft adhesion factor (By similarity).</text>
</comment>
<comment type="function">
    <molecule>Protease NS2</molecule>
    <text evidence="3 5">Cysteine protease required for the proteolytic auto-cleavage between the non-structural proteins NS2 and NS3 (By similarity). The N-terminus of NS3 is required for the function of NS2 protease (active region NS2-3) (By similarity). Promotes the initiation of viral particle assembly by mediating the interaction between structural and non-structural proteins (By similarity).</text>
</comment>
<comment type="function">
    <molecule>Serine protease/helicase NS3</molecule>
    <text evidence="5 12">Displays three enzymatic activities: serine protease with a chymotrypsin-like fold, NTPase and RNA helicase (By similarity). NS3 serine protease, in association with NS4A, is responsible for the cleavages of NS3-NS4A, NS4A-NS4B, NS4B-NS5A and NS5A-NS5B (By similarity). The NS3/NS4A complex prevents phosphorylation of host IRF3, thus preventing the establishment of dsRNA induced antiviral state (By similarity). The NS3/NS4A complex induces host amino acid transporter component SLC3A2, thus contributing to HCV propagation (By similarity). NS3 RNA helicase binds to RNA and unwinds both dsDNA and dsRNA in the 3' to 5' direction, and likely resolves RNA complicated stable secondary structures in the template strand (By similarity). Binds a single ATP and catalyzes the unzipping of a single base pair of dsRNA (By similarity). Inhibits host antiviral proteins TBK1 and IRF3 thereby preventing the establishment of an antiviral state (By similarity). Cleaves host MAVS/CARDIF thereby preventing the establishment of an antiviral state (By similarity). Cleaves host TICAM1/TRIF, thereby disrupting TLR3 signaling and preventing the establishment of an antiviral state (By similarity).</text>
</comment>
<comment type="function">
    <molecule>Non-structural protein 4B</molecule>
    <text evidence="5">Induces a specific membrane alteration that serves as a scaffold for the virus replication complex (By similarity). This membrane alteration gives rise to the so-called ER-derived membranous web that contains the replication complex (By similarity). NS4B self-interaction contributes to its function in membranous web formation (By similarity). Promotes host TRIF protein degradation in a CASP8-dependent manner thereby inhibiting host TLR3-mediated interferon signaling (By similarity). Disrupts the interaction between STING and TBK1 contributing to the inhibition of interferon signaling (By similarity).</text>
</comment>
<comment type="function">
    <molecule>Non-structural protein 5A</molecule>
    <text evidence="2 4 5 11 12">Phosphorylated protein that is indispensable for viral replication and assembly (By similarity). Both hypo- and hyperphosphorylated states are required for the viral life cycle (By similarity). The hyperphosphorylated form of NS5A is an inhibitor of viral replication (By similarity). Involved in RNA-binding and especially in binding to the viral genome (By similarity). Zinc is essential for RNA-binding (By similarity). Participates in the viral particle production as a result of its interaction with the mature viral core protein (By similarity). Its interaction with host VAPB may target the viral replication complex to vesicles (By similarity). Down-regulates viral IRES translation initiation (By similarity). Mediates interferon resistance, presumably by interacting with and inhibiting host EIF2AK2/PKR (By similarity). Prevents BIN1-induced apoptosis (By similarity). Acts as a transcriptional activator of some host genes important for viral replication when localized in the nucleus (By similarity). Via the interaction with host PACSIN2, modulates lipid droplet formation in order to promote virion assembly (By similarity). Modulates TNFRSF21/DR6 signaling pathway for viral propagation (By similarity).</text>
</comment>
<comment type="function">
    <molecule>RNA-directed RNA polymerase</molecule>
    <text evidence="5">RNA-dependent RNA polymerase that performs primer-template recognition and RNA synthesis during viral replication. Initiates RNA transcription/replication at a flavin adenine dinucleotide (FAD), resulting in a 5'- FAD cap on viral RNAs. In this way, recognition of viral 5' RNA by host pattern recognition receptors can be bypassed, thereby evading activation of antiviral pathways.</text>
</comment>
<comment type="catalytic activity">
    <molecule>Serine protease/helicase NS3</molecule>
    <reaction evidence="5">
        <text>Hydrolysis of four peptide bonds in the viral precursor polyprotein, commonly with Asp or Glu in the P6 position, Cys or Thr in P1 and Ser or Ala in P1'.</text>
        <dbReference type="EC" id="3.4.21.98"/>
    </reaction>
</comment>
<comment type="catalytic activity">
    <molecule>Serine protease/helicase NS3</molecule>
    <reaction evidence="5">
        <text>a ribonucleoside 5'-triphosphate + H2O = a ribonucleoside 5'-diphosphate + phosphate + H(+)</text>
        <dbReference type="Rhea" id="RHEA:23680"/>
        <dbReference type="ChEBI" id="CHEBI:15377"/>
        <dbReference type="ChEBI" id="CHEBI:15378"/>
        <dbReference type="ChEBI" id="CHEBI:43474"/>
        <dbReference type="ChEBI" id="CHEBI:57930"/>
        <dbReference type="ChEBI" id="CHEBI:61557"/>
        <dbReference type="EC" id="3.6.1.15"/>
    </reaction>
</comment>
<comment type="catalytic activity">
    <molecule>Serine protease/helicase NS3</molecule>
    <reaction evidence="5">
        <text>ATP + H2O = ADP + phosphate + H(+)</text>
        <dbReference type="Rhea" id="RHEA:13065"/>
        <dbReference type="ChEBI" id="CHEBI:15377"/>
        <dbReference type="ChEBI" id="CHEBI:15378"/>
        <dbReference type="ChEBI" id="CHEBI:30616"/>
        <dbReference type="ChEBI" id="CHEBI:43474"/>
        <dbReference type="ChEBI" id="CHEBI:456216"/>
        <dbReference type="EC" id="3.6.4.13"/>
    </reaction>
</comment>
<comment type="catalytic activity">
    <molecule>RNA-directed RNA polymerase</molecule>
    <reaction evidence="14">
        <text>RNA(n) + a ribonucleoside 5'-triphosphate = RNA(n+1) + diphosphate</text>
        <dbReference type="Rhea" id="RHEA:21248"/>
        <dbReference type="Rhea" id="RHEA-COMP:14527"/>
        <dbReference type="Rhea" id="RHEA-COMP:17342"/>
        <dbReference type="ChEBI" id="CHEBI:33019"/>
        <dbReference type="ChEBI" id="CHEBI:61557"/>
        <dbReference type="ChEBI" id="CHEBI:140395"/>
        <dbReference type="EC" id="2.7.7.48"/>
    </reaction>
</comment>
<comment type="cofactor">
    <molecule>Protease NS2</molecule>
    <cofactor evidence="3">
        <name>Zn(2+)</name>
        <dbReference type="ChEBI" id="CHEBI:29105"/>
    </cofactor>
    <text evidence="3">Activity of protease NS2 is dependent on zinc ions and completely inhibited by EDTA. This is probably due to the fact that NS2 protease activity needs NS3 N-terminus that binds a zinc atom (active region NS2-3).</text>
</comment>
<comment type="cofactor">
    <molecule>Serine protease/helicase NS3</molecule>
    <cofactor evidence="3">
        <name>Zn(2+)</name>
        <dbReference type="ChEBI" id="CHEBI:29105"/>
    </cofactor>
    <cofactor evidence="12">
        <name>Mg(2+)</name>
        <dbReference type="ChEBI" id="CHEBI:18420"/>
    </cofactor>
    <text evidence="3 12">Binds 1 zinc ion, which has a structural role (By similarity). The magnesium ion is essential for the helicase activity (By similarity).</text>
</comment>
<comment type="cofactor">
    <molecule>RNA-directed RNA polymerase</molecule>
    <cofactor evidence="3">
        <name>Mg(2+)</name>
        <dbReference type="ChEBI" id="CHEBI:18420"/>
    </cofactor>
    <text evidence="3">Binds 2 magnesium ion that constitute a dinuclear catalytic metal center.</text>
</comment>
<comment type="activity regulation">
    <molecule>Viroporin p7</molecule>
    <text evidence="2 5">Inhibited by the antiviral drug hexamethylene amiloride (By similarity). Inhibition by amantadine appears to be genotype-dependent (By similarity). Also inhibited by long-alkyl-chain iminosugar derivatives (By similarity).</text>
</comment>
<comment type="activity regulation">
    <molecule>RNA-directed RNA polymerase</molecule>
    <text evidence="5">Activity is up-regulated by PRK2/PKN2-mediated phosphorylation.</text>
</comment>
<comment type="subunit">
    <molecule>Mature core protein</molecule>
    <text evidence="2 4 5 6 8 9 11">Homooligomer (By similarity). Interacts with E1 (via C-terminus) (By similarity). Interacts with the non-structural protein 5A (By similarity). Interacts (via N-terminus) with host STAT1 (via SH2 domain); this interaction results in decreased STAT1 phosphorylation and ubiquitin-mediated proteasome-dependent STAT1 degradation, leading to decreased IFN-stimulated gene transcription (By similarity). Interacts with host STAT3; this interaction constitutively activates STAT3 (By similarity). Interacts with host LTBR receptor (By similarity). Interacts with host TNFRSF1A receptor and possibly induces apoptosis (By similarity). Interacts with host HNRPK (By similarity). Interacts with host YWHAE (By similarity). Interacts with host UBE3A/E6AP (By similarity). Interacts with host DDX3X (By similarity). Interacts with host APOA2 (By similarity). Interacts with host RXRA protein (By similarity). Interacts with host SP110 isoform 3/Sp110b; this interaction sequesters the transcriptional corepressor SP110 away from the nucleus (By similarity). Interacts with host CREB3 nuclear transcription protein; this interaction triggers cell transformation (By similarity). Interacts with host ACY3 (By similarity). Interacts with host C1QR1 (By similarity). Interacts with host RBM24; this interaction, which enhances the interaction of the mature core protein with 5'-UTR, may inhibit viral translation and favor replication (By similarity). Interacts with host EIF2AK2/PKR; this interaction induces the autophosphorylation of EIF2AK2 (By similarity). Part of the viral assembly initiation complex composed of NS2, E1, E2, NS3, NS4A, NS5A and the mature core protein (By similarity).</text>
</comment>
<comment type="subunit">
    <molecule>Envelope glycoprotein E1</molecule>
    <text evidence="5 11">Forms a heterodimer with envelope glycoprotein E2 (By similarity). Interacts with mature core protein (By similarity). Interacts with protease NS2 (By similarity). The heterodimer E1/E2 interacts with host CLDN1; this interaction plays a role in viral entry into host cell (By similarity). Interacts with host SPSB2 (via C-terminus) (By similarity). Part of the viral assembly initiation complex composed of NS2, E1, E2, NS3, NS4A, NS5A and the mature core protein (By similarity). Interacts with host NEURL3; this interaction prevents E1 binding to glycoprotein E2 (By similarity).</text>
</comment>
<comment type="subunit">
    <molecule>Envelope glycoprotein E2</molecule>
    <text evidence="5 11 12">Forms a heterodimer with envelope glycoprotein E1 (By similarity). Interacts with host CD81 and SCARB1 receptors; these interactions play a role in viral entry into host cell (By similarity). Interacts with host EIF2AK2/PKR; this interaction inhibits EIF2AK2 and probably allows the virus to evade the innate immune response (By similarity). Interacts with host CD209/DC-SIGN and CLEC4M/DC-SIGNR (By similarity). Interact with host SPCS1; this interaction is essential for viral particle assembly (By similarity). Interacts with protease NS2 (By similarity). The heterodimer E1/E2 interacts with host CLDN1; this interaction plays a role in viral entry into host cell (By similarity). Part of the viral assembly initiation complex composed of NS2, E1, E2, NS3, NS4A, NS5A and the mature core protein (By similarity). Interacts with host SLC3A2/4F2hc; the interaction may facilitate viral entry into host cell (By similarity). Interacts with human PLSCR1 (By similarity).</text>
</comment>
<comment type="subunit">
    <molecule>Viroporin p7</molecule>
    <text evidence="1 5 11">Homohexamer (By similarity). Homoheptamer (By similarity). Interacts with protease NS2 (By similarity).</text>
</comment>
<comment type="subunit">
    <molecule>Protease NS2</molecule>
    <text evidence="5 11">Homodimer (By similarity). Interacts with host SPCS1; this interaction is essential for viral particle assembly (By similarity). Interacts with envelope glycoprotein E1 (By similarity). Interacts with envelope glycoprotein E2 (By similarity). Interacts with viroporin p7 (By similarity). Interacts with serine protease/helicase NS3 (By similarity). Part of the replication complex composed of NS2, NS3, NS4A, NS4B, NS5A and the RNA-directed RNA polymerase embedded in an ER-derived membranous web (By similarity). Part of the viral assembly initiation complex composed of NS2, E1, E2, NS3, NS4A, NS5A and the mature core protein (By similarity).</text>
</comment>
<comment type="subunit">
    <molecule>Serine protease/helicase NS3</molecule>
    <text evidence="3 5 11 12">Interacts with protease NS2 (By similarity). Interacts with non-structural protein 4A; this interaction stabilizes the folding of NS3 serine protease (By similarity). NS3-NS4A interaction is essential for NS3 activation and allows membrane anchorage of the latter (By similarity). NS3/NS4A complex also prevents phosphorylation of host IRF3, thus preventing the establishment of dsRNA induced antiviral state (By similarity). Interacts with host MAVS; this interaction leads to the cleavage and inhibition of host MAVS (By similarity). Interacts with host TICAM1; this interaction leads to the cleavage and inhibition of host TICAM1 (By similarity). Interacts with host TANK-binding kinase/TBK1; this interaction results in the inhibition of the association between TBK1 and IRF3, which leads to the inhibition of IRF3 activation (By similarity). Interacts with host RBM24 (By similarity). Part of the replication complex composed of NS2, NS3, NS4A, NS4B, NS5A and the RNA-directed RNA polymerase embedded in an ER-derived membranous web (By similarity). Part of the viral assembly initiation complex composed of NS2, E1, E2, NS3, NS4A, NS5A and the mature core protein (By similarity).</text>
</comment>
<comment type="subunit">
    <molecule>Non-structural protein 4A</molecule>
    <text evidence="2 3 5 11">Interacts with NS3 serine protease; this interaction stabilizes the folding of NS3 serine protease (By similarity). NS3-NS4A interaction is essential for NS3 activation and allows membrane anchorage of the latter (By similarity). Interacts with non-structural protein 5A (via N-terminus) (By similarity). Part of the replication complex composed of NS2, NS3, NS4A, NS4B, NS5A and the RNA-directed RNA polymerase embedded in an ER-derived membranous web (By similarity). Part of the viral assembly initiation complex composed of NS2, E1, E2, NS3, NS4A, NS5A and the mature core protein (By similarity).</text>
</comment>
<comment type="subunit">
    <molecule>Non-structural protein 4B</molecule>
    <text evidence="5 11">Homomultimer (By similarity). Interacts with non-structural protein NS5A (By similarity). Interacts with host PLA2G4C; this interaction likely initiates the recruitment of replication complexes to lipid droplets (By similarity). Interacts with host STING; this interaction disrupts the interaction between STING and TBK1 thereby suppressing the interferon signaling (By similarity). Part of the replication complex composed of NS2, NS3, NS4A, NS4B, NS5A and the RNA-directed RNA polymerase embedded in an ER-derived membranous web (By similarity).</text>
</comment>
<comment type="subunit">
    <molecule>Non-structural protein 5A</molecule>
    <text evidence="2 3 4 5 11">Monomer. Homodimer; dimerization is required for RNA-binding (By similarity). Interacts with the mature core protein (By similarity). Interacts (via N-terminus) with non-structural protein 4A (By similarity). Interacts with non-structural protein 4B. Interacts (via region D2) with RNA-directed RNA polymerase (By similarity). Part of the viral assembly initiation complex composed of NS2, E1, E2, NS3, NS4A, NS5A and the mature core protein (By similarity). Part of the replication complex composed of NS2, NS3, NS4A, NS4B, NS5A and the RNA-directed RNA polymerase embedded in an ER-derived membranous web (By similarity). Interacts with host GRB2 (By similarity). Interacts with host BIN1 (By similarity). Interacts with host PIK3R1 (By similarity). Interacts with host SRCAP (By similarity). Interacts with host FKBP8 (By similarity). Interacts (via C-terminus) with host VAPB (via MSP domain). Interacts with host EIF2AK2/PKR; this interaction leads to disruption of EIF2AK2 dimerization by NS5A and probably allows the virus to evade the innate immune response. Interacts (via N-terminus) with host PACSIN2 (via N-terminus); this interaction attenuates protein kinase C alpha-mediated phosphorylation of PACSIN2 by disrupting the interaction between PACSIN2 and PRKCA (By similarity). Interacts (via N-terminus) with host SRC kinase (via SH2 domain) (By similarity). Interacts with most Src-family kinases (By similarity). Interacts with host IFI27 and SKP2; promotes the ubiquitin-mediated proteasomal degradation of NS5A (By similarity). Interacts with host GPS2 (By similarity). Interacts with host TNFRSF21; this interaction allows the modulation by the virus of JNK, p38 MAPK, STAT3, and Akt signaling pathways in a DR6-dependent manner. Interacts (via N-terminus) with host CIDEB (via N-terminus); this interaction seems to regulate the association of HCV particles with APOE (By similarity). Interacts with host CHKA/Choline Kinase-alpha; CHKA bridges host PI4KA and NS5A and potentiates NS5A-stimulated PI4KA activity, which then facilitates the targeting of the ternary complex to the ER for viral replication (By similarity). Interacts with host SPSB2 (via C-terminus); this interaction targets NS5A for ubiquitination and degradation (By similarity). Interacts with host RAB18; this interaction may promote the association of NS5A and other replicase components with lipid droplets (By similarity). Interacts (via region D2) with host PPIA/CYPA; the interaction stimulates RNA-binding ability of NS5A and is dependent on the peptidyl-prolyl cis-trans isomerase activity of PPIA/CYPA. Interacts with host TRIM14; this interaction induces the degradation of NS5A (By similarity).</text>
</comment>
<comment type="subunit">
    <molecule>RNA-directed RNA polymerase</molecule>
    <text evidence="5">Homooligomer (By similarity). Interacts with non-structural protein 5A (By similarity). Interacts with host VAPB (By similarity). Interacts with host PRK2/PKN2 (By similarity). Interacts with host HNRNPA1 and SEPT6; these interactions facilitate viral replication (By similarity). Part of the replication complex composed of NS2, NS3, NS4A, NS4B, NS5A and the RNA-directed RNA polymerase (By similarity).</text>
</comment>
<comment type="subcellular location">
    <molecule>Core protein precursor</molecule>
    <subcellularLocation>
        <location evidence="4">Host endoplasmic reticulum membrane</location>
        <topology evidence="13">Single-pass membrane protein</topology>
    </subcellularLocation>
    <subcellularLocation>
        <location evidence="4">Host mitochondrion membrane</location>
        <topology evidence="13">Single-pass type I membrane protein</topology>
    </subcellularLocation>
    <text>The C-terminal transmembrane domain of the core protein precursor contains an ER signal leading the nascent polyprotein to the ER membrane.</text>
</comment>
<comment type="subcellular location">
    <molecule>Mature core protein</molecule>
    <subcellularLocation>
        <location evidence="11">Virion</location>
    </subcellularLocation>
    <subcellularLocation>
        <location evidence="11">Host cytoplasm</location>
    </subcellularLocation>
    <subcellularLocation>
        <location evidence="2">Host nucleus</location>
    </subcellularLocation>
    <subcellularLocation>
        <location evidence="11">Host lipid droplet</location>
    </subcellularLocation>
    <text evidence="5">Only a minor proportion of core protein is present in the nucleus (By similarity). Probably present on the surface of lipid droplets (By similarity).</text>
</comment>
<comment type="subcellular location">
    <molecule>Envelope glycoprotein E1</molecule>
    <subcellularLocation>
        <location evidence="19">Virion membrane</location>
        <topology evidence="19">Single-pass type I membrane protein</topology>
    </subcellularLocation>
    <subcellularLocation>
        <location>Host endoplasmic reticulum membrane</location>
        <topology evidence="5">Single-pass type I membrane protein</topology>
    </subcellularLocation>
    <text evidence="5">The C-terminal transmembrane domain acts as a signal sequence and forms a hairpin structure before cleavage by host signal peptidase (By similarity). After cleavage, the membrane sequence is retained at the C-terminus of the protein, serving as ER membrane anchor (By similarity). A reorientation of the second hydrophobic stretch occurs after cleavage producing a single reoriented transmembrane domain (By similarity). These events explain the final topology of the protein (By similarity).</text>
</comment>
<comment type="subcellular location">
    <molecule>Envelope glycoprotein E2</molecule>
    <subcellularLocation>
        <location evidence="19">Virion membrane</location>
        <topology evidence="19">Single-pass type I membrane protein</topology>
    </subcellularLocation>
    <subcellularLocation>
        <location>Host endoplasmic reticulum membrane</location>
        <topology evidence="5">Single-pass type I membrane protein</topology>
    </subcellularLocation>
    <subcellularLocation>
        <location evidence="12">Host lipid droplet</location>
    </subcellularLocation>
    <text evidence="5">The C-terminal transmembrane domain acts as a signal sequence and forms a hairpin structure before cleavage by host signal peptidase (By similarity). After cleavage, the membrane sequence is retained at the C-terminus of the protein, serving as ER membrane anchor (By similarity). A reorientation of the second hydrophobic stretch occurs after cleavage producing a single reoriented transmembrane domain (By similarity). These events explain the final topology of the protein (By similarity).</text>
</comment>
<comment type="subcellular location">
    <molecule>Viroporin p7</molecule>
    <subcellularLocation>
        <location evidence="5">Host endoplasmic reticulum membrane</location>
        <topology evidence="5">Multi-pass membrane protein</topology>
    </subcellularLocation>
    <subcellularLocation>
        <location evidence="5">Host mitochondrion</location>
    </subcellularLocation>
    <subcellularLocation>
        <location evidence="5">Host cell membrane</location>
    </subcellularLocation>
    <text evidence="5">The C-terminus of p7 membrane domain acts as a signal sequence (By similarity). After cleavage by host signal peptidase, the membrane sequence is retained at the C-terminus of the protein, serving as ER membrane anchor (By similarity). ER retention of p7 is leaky and a small fraction reaches the plasma membrane (By similarity).</text>
</comment>
<comment type="subcellular location">
    <molecule>Protease NS2</molecule>
    <subcellularLocation>
        <location evidence="5">Host endoplasmic reticulum membrane</location>
        <topology evidence="5">Multi-pass membrane protein</topology>
    </subcellularLocation>
    <subcellularLocation>
        <location evidence="12">Host lipid droplet</location>
    </subcellularLocation>
    <text evidence="11">Probably present on the surface of lipid droplets.</text>
</comment>
<comment type="subcellular location">
    <molecule>Serine protease/helicase NS3</molecule>
    <subcellularLocation>
        <location evidence="19">Host endoplasmic reticulum membrane</location>
        <topology evidence="19">Peripheral membrane protein</topology>
    </subcellularLocation>
    <text evidence="19">NS3 is associated to the ER membrane through its binding to NS4A.</text>
</comment>
<comment type="subcellular location">
    <molecule>Non-structural protein 4A</molecule>
    <subcellularLocation>
        <location evidence="19">Host endoplasmic reticulum membrane</location>
        <topology evidence="19">Single-pass type I membrane protein</topology>
    </subcellularLocation>
    <text>Host membrane insertion occurs after processing by the NS3 protease.</text>
</comment>
<comment type="subcellular location">
    <molecule>Non-structural protein 4B</molecule>
    <subcellularLocation>
        <location evidence="5">Host endoplasmic reticulum membrane</location>
        <topology evidence="5">Multi-pass membrane protein</topology>
    </subcellularLocation>
    <text evidence="5">A reorientation of the N-terminus into the ER lumen occurs post-translationally.</text>
</comment>
<comment type="subcellular location">
    <molecule>Non-structural protein 5A</molecule>
    <subcellularLocation>
        <location evidence="5">Host endoplasmic reticulum membrane</location>
        <topology evidence="5">Peripheral membrane protein</topology>
    </subcellularLocation>
    <subcellularLocation>
        <location evidence="5">Host cytoplasm</location>
        <location evidence="5">Host perinuclear region</location>
    </subcellularLocation>
    <subcellularLocation>
        <location evidence="2">Host mitochondrion</location>
    </subcellularLocation>
    <subcellularLocation>
        <location evidence="5">Host cytoplasm</location>
    </subcellularLocation>
    <subcellularLocation>
        <location evidence="2">Host nucleus</location>
    </subcellularLocation>
    <subcellularLocation>
        <location evidence="12">Host lipid droplet</location>
    </subcellularLocation>
    <text evidence="2 5">Host membrane insertion occurs after processing by the NS3 protease (By similarity). Localizes at the surface of lipid droplets (By similarity).</text>
</comment>
<comment type="subcellular location">
    <molecule>RNA-directed RNA polymerase</molecule>
    <subcellularLocation>
        <location evidence="5">Host cytoplasm</location>
    </subcellularLocation>
    <subcellularLocation>
        <location>Host endoplasmic reticulum membrane</location>
        <topology evidence="5">Single-pass type IV membrane protein</topology>
    </subcellularLocation>
    <text evidence="5">Host membrane insertion occurs after processing by the NS3 protease.</text>
</comment>
<comment type="domain">
    <molecule>Envelope glycoprotein E1</molecule>
    <text evidence="5">The transmembrane regions of envelope E1 and E2 glycoproteins are involved in heterodimer formation, ER localization, and assembly of these proteins.</text>
</comment>
<comment type="domain">
    <molecule>Envelope glycoprotein E2</molecule>
    <text evidence="3 5">The transmembrane regions of envelope E1 and E2 glycoproteins are involved in heterodimer formation, ER localization, and assembly of these proteins (By similarity). Envelope E2 glycoprotein contain two highly variable regions called hypervariable region 1 and 2 (HVR1 and HVR2) (By similarity). E2 also contain two segments involved in CD81-binding (By similarity). HVR1 is implicated in the SCARB1-mediated cell entry and probably acts as a regulator of the association of particles with lipids (By similarity).</text>
</comment>
<comment type="domain">
    <molecule>Protease NS2</molecule>
    <text evidence="3">The N-terminus of NS3 is required for the catalytic activity of protease NS2 (By similarity). The minimal catalytic region includes the C-terminus of NS2 and the N-terminus NS3 protease domain (active region NS2-3) (By similarity).</text>
</comment>
<comment type="domain">
    <molecule>Serine protease/helicase NS3</molecule>
    <text evidence="2 5">The N-terminal one-third contains the protease activity (By similarity). This region contains a zinc atom that does not belong to the active site, but may play a structural rather than a catalytic role (By similarity). This region is essential for the activity of protease NS2, maybe by contributing to the folding of the latter (By similarity). The NTPase/helicase activity is located in the twothirds C-terminus of NS3, this domain contains the NTPase and RNA-binding regions (By similarity).</text>
</comment>
<comment type="domain">
    <molecule>Non-structural protein 4B</molecule>
    <text evidence="11">Contains a glycine zipper region that critically contributes to the biogenesis of functional ER-derived replication organelles.</text>
</comment>
<comment type="domain">
    <molecule>Non-structural protein 5A</molecule>
    <text evidence="2 5">The N-terminus of NS5A acts as membrane anchor (By similarity). The central part of NS5A contains a variable region called interferon sensitivity determining region (ISDR) and seems to be intrinsically disordered and interacts with NS5B and host EIF2AK2 (By similarity). The C-terminus of NS5A contains a variable region called variable region 3 (V3) (By similarity). ISDR and V3 may be involved in sensitivity and/or resistance to IFN-alpha therapy (By similarity). The C-terminus contains a nuclear localization signal (By similarity). The SH3-binding domain is involved in the interaction with host BIN1, GRB2 and Src-family kinases (By similarity).</text>
</comment>
<comment type="PTM">
    <molecule>Genome polyprotein</molecule>
    <text evidence="4 5">Specific enzymatic cleavages in vivo yield mature proteins (By similarity). The structural proteins, core, E1, E2 and p7 are produced by proteolytic processing by host signal peptidases (By similarity). The core protein precursor is synthesized as a 23 kDa, which is retained in the ER membrane through the hydrophobic signal peptide (By similarity). Cleavage by the signal peptidase releases the 21 kDa mature core protein (By similarity). The cleavage of the core protein precursor occurs between aminoacids 176 and 188 but the exact cleavage site is not known (By similarity). Some degraded forms of the core protein appear as well during the course of infection (By similarity). The other proteins (p7, NS2, NS3, NS4A, NS4B, NS5A and NS5B) are cleaved by the viral proteases (By similarity). Autoprocessing between NS2 and NS3 is mediated by the NS2 cysteine protease catalytic domain and regulated by the NS3 N-terminal domain (By similarity).</text>
</comment>
<comment type="PTM">
    <molecule>Mature core protein</molecule>
    <text evidence="7">Phosphorylated by host PKC and PKA.</text>
</comment>
<comment type="PTM">
    <molecule>Mature core protein</molecule>
    <text evidence="8">Ubiquitinated; mediated by UBE3A and leading to core protein subsequent proteasomal degradation.</text>
</comment>
<comment type="PTM">
    <molecule>Envelope glycoprotein E1</molecule>
    <text evidence="5">Highly N-glycosylated.</text>
</comment>
<comment type="PTM">
    <molecule>Envelope glycoprotein E2</molecule>
    <text evidence="5">Highly N-glycosylated.</text>
</comment>
<comment type="PTM">
    <molecule>Protease NS2</molecule>
    <text evidence="5">Palmitoylation is required for NS2/3 autoprocessing and E2 recruitment to membranes.</text>
</comment>
<comment type="PTM">
    <molecule>Non-structural protein 4B</molecule>
    <text evidence="5">Palmitoylated. This modification may play a role in its polymerization or in protein-protein interactions.</text>
</comment>
<comment type="PTM">
    <molecule>Non-structural protein 5A</molecule>
    <text evidence="2 4">Phosphorylated on serines in a basal form termed p56 (By similarity). p58 is a hyperphosphorylated form of p56 (By similarity). p56 and p58 coexist in the cell in roughly equivalent amounts (By similarity). Hyperphosphorylation is dependent on the presence of NS4A (By similarity). Host CSNK1A1/CKI-alpha or RPS6KB1 kinases may be responsible for NS5A phosphorylation (By similarity).</text>
</comment>
<comment type="PTM">
    <molecule>Non-structural protein 5A</molecule>
    <text evidence="11">Tyrosine phosphorylation is essential for the interaction with host SRC.</text>
</comment>
<comment type="PTM">
    <molecule>RNA-directed RNA polymerase</molecule>
    <text evidence="2">The N-terminus is phosphorylated by host PRK2/PKN2.</text>
</comment>
<comment type="miscellaneous">
    <text evidence="19">Viral particle assembly takes place at the surface of ER-derived membranes in close proximity to lipid droplets. NS2 associates with E1/E2 glycoproteins, NS3 and NS5A, which interacts with the viral RNA and core protein to promote genome encapsidation. The nucleocapsid buds at the ER membrane where E1/E2 glycoproteins are anchored and afterward associate with nascent lipid droplet to acquire APOE and APOC. Secretion of viral particles is probably regulated by viroporin p7.</text>
</comment>
<comment type="miscellaneous">
    <molecule>Non-structural protein 5A</molecule>
    <text evidence="19">Cell culture adaptation of the virus leads to mutations in NS5A, reducing its inhibitory effect on replication.</text>
</comment>
<comment type="miscellaneous">
    <molecule>Mature core protein</molecule>
    <text evidence="2">Exerts viral interference on hepatitis B virus when HCV and HBV coinfect the same cell, by suppressing HBV gene expression, RNA encapsidation and budding.</text>
</comment>
<comment type="similarity">
    <text evidence="19">Belongs to the hepacivirus polyprotein family.</text>
</comment>
<comment type="caution">
    <text evidence="19">The core gene probably also codes for alternative reading frame proteins (ARFPs). Many functions depicted for the core protein might belong to the ARFPs.</text>
</comment>
<feature type="initiator methionine" description="Removed; by host" evidence="4">
    <location>
        <position position="1"/>
    </location>
</feature>
<feature type="chain" id="PRO_0000450897" description="Genome polyprotein">
    <location>
        <begin position="2"/>
        <end position="3037"/>
    </location>
</feature>
<feature type="chain" id="PRO_0000045520" description="Core protein precursor">
    <location>
        <begin position="2"/>
        <end position="191"/>
    </location>
</feature>
<feature type="chain" id="PRO_0000045521" description="Mature core protein">
    <location>
        <begin position="2"/>
        <end position="177"/>
    </location>
</feature>
<feature type="propeptide" id="PRO_0000045522" description="ER anchor for the core protein, removed in mature form by host signal peptidase">
    <location>
        <begin position="178"/>
        <end position="191"/>
    </location>
</feature>
<feature type="chain" id="PRO_0000045523" description="Envelope glycoprotein E1">
    <location>
        <begin position="192"/>
        <end position="383"/>
    </location>
</feature>
<feature type="chain" id="PRO_0000045524" description="Envelope glycoprotein E2">
    <location>
        <begin position="384"/>
        <end position="750"/>
    </location>
</feature>
<feature type="chain" id="PRO_0000045525" description="Viroporin p7">
    <location>
        <begin position="751"/>
        <end position="813"/>
    </location>
</feature>
<feature type="chain" id="PRO_0000045526" description="Protease NS2" evidence="16">
    <location>
        <begin position="814"/>
        <end position="1030"/>
    </location>
</feature>
<feature type="chain" id="PRO_0000045527" description="Serine protease/helicase NS3">
    <location>
        <begin position="1031"/>
        <end position="1661"/>
    </location>
</feature>
<feature type="chain" id="PRO_0000045528" description="Non-structural protein 4A">
    <location>
        <begin position="1662"/>
        <end position="1715"/>
    </location>
</feature>
<feature type="chain" id="PRO_0000045529" description="Non-structural protein 4B">
    <location>
        <begin position="1716"/>
        <end position="1976"/>
    </location>
</feature>
<feature type="chain" id="PRO_0000045530" description="Non-structural protein 5A">
    <location>
        <begin position="1977"/>
        <end position="2446"/>
    </location>
</feature>
<feature type="chain" id="PRO_0000045531" description="RNA-directed RNA polymerase">
    <location>
        <begin position="2447"/>
        <end position="3037"/>
    </location>
</feature>
<feature type="topological domain" description="Cytoplasmic" evidence="13">
    <location>
        <begin position="2"/>
        <end position="168"/>
    </location>
</feature>
<feature type="transmembrane region" description="Helical" evidence="13">
    <location>
        <begin position="169"/>
        <end position="189"/>
    </location>
</feature>
<feature type="topological domain" description="Lumenal" evidence="5">
    <location>
        <begin position="190"/>
        <end position="358"/>
    </location>
</feature>
<feature type="transmembrane region" description="Helical" evidence="5">
    <location>
        <begin position="359"/>
        <end position="379"/>
    </location>
</feature>
<feature type="topological domain" description="Lumenal" evidence="5">
    <location>
        <begin position="380"/>
        <end position="729"/>
    </location>
</feature>
<feature type="transmembrane region" description="Helical" evidence="5">
    <location>
        <begin position="730"/>
        <end position="750"/>
    </location>
</feature>
<feature type="topological domain" description="Lumenal" evidence="5">
    <location>
        <begin position="751"/>
        <end position="761"/>
    </location>
</feature>
<feature type="transmembrane region" description="Helical" evidence="5">
    <location>
        <begin position="762"/>
        <end position="782"/>
    </location>
</feature>
<feature type="topological domain" description="Cytoplasmic" evidence="5">
    <location>
        <begin position="783"/>
        <end position="786"/>
    </location>
</feature>
<feature type="transmembrane region" description="Helical" evidence="5">
    <location>
        <begin position="787"/>
        <end position="807"/>
    </location>
</feature>
<feature type="topological domain" description="Lumenal" evidence="5">
    <location>
        <begin position="808"/>
        <end position="817"/>
    </location>
</feature>
<feature type="transmembrane region" description="Helical" evidence="12">
    <location>
        <begin position="818"/>
        <end position="838"/>
    </location>
</feature>
<feature type="topological domain" description="Cytoplasmic" evidence="12">
    <location>
        <begin position="839"/>
        <end position="885"/>
    </location>
</feature>
<feature type="transmembrane region" description="Helical" evidence="12">
    <location>
        <begin position="886"/>
        <end position="906"/>
    </location>
</feature>
<feature type="topological domain" description="Lumenal" evidence="12">
    <location>
        <begin position="907"/>
        <end position="932"/>
    </location>
</feature>
<feature type="transmembrane region" description="Helical" evidence="12">
    <location>
        <begin position="933"/>
        <end position="953"/>
    </location>
</feature>
<feature type="topological domain" description="Cytoplasmic" evidence="12">
    <location>
        <begin position="954"/>
        <end position="1661"/>
    </location>
</feature>
<feature type="transmembrane region" description="Helical" evidence="13">
    <location>
        <begin position="1662"/>
        <end position="1682"/>
    </location>
</feature>
<feature type="topological domain" description="Cytoplasmic" evidence="13">
    <location>
        <begin position="1683"/>
        <end position="1809"/>
    </location>
</feature>
<feature type="transmembrane region" description="Helical" evidence="13">
    <location>
        <begin position="1810"/>
        <end position="1830"/>
    </location>
</feature>
<feature type="topological domain" description="Lumenal" evidence="5">
    <location>
        <begin position="1831"/>
        <end position="1832"/>
    </location>
</feature>
<feature type="transmembrane region" description="Helical" evidence="13">
    <location>
        <begin position="1833"/>
        <end position="1853"/>
    </location>
</feature>
<feature type="topological domain" description="Cytoplasmic" evidence="13">
    <location>
        <position position="1854"/>
    </location>
</feature>
<feature type="transmembrane region" description="Helical" evidence="13">
    <location>
        <begin position="1855"/>
        <end position="1875"/>
    </location>
</feature>
<feature type="topological domain" description="Lumenal" evidence="13">
    <location>
        <begin position="1876"/>
        <end position="1885"/>
    </location>
</feature>
<feature type="transmembrane region" description="Helical" evidence="13">
    <location>
        <begin position="1886"/>
        <end position="1906"/>
    </location>
</feature>
<feature type="topological domain" description="Cytoplasmic" evidence="13">
    <location>
        <begin position="1907"/>
        <end position="1976"/>
    </location>
</feature>
<feature type="intramembrane region" evidence="5">
    <location>
        <begin position="1977"/>
        <end position="2006"/>
    </location>
</feature>
<feature type="topological domain" description="Cytoplasmic" evidence="5">
    <location>
        <begin position="2007"/>
        <end position="3016"/>
    </location>
</feature>
<feature type="transmembrane region" description="Helical" evidence="5">
    <location>
        <begin position="3017"/>
        <end position="3037"/>
    </location>
</feature>
<feature type="domain" description="Peptidase C18" evidence="16">
    <location>
        <begin position="905"/>
        <end position="1030"/>
    </location>
</feature>
<feature type="domain" description="Peptidase S29" evidence="17">
    <location>
        <begin position="1031"/>
        <end position="1212"/>
    </location>
</feature>
<feature type="domain" description="Helicase ATP-binding" evidence="15">
    <location>
        <begin position="1221"/>
        <end position="1373"/>
    </location>
</feature>
<feature type="domain" description="RdRp catalytic" evidence="14">
    <location>
        <begin position="2660"/>
        <end position="2778"/>
    </location>
</feature>
<feature type="region of interest" description="Disordered" evidence="5">
    <location>
        <begin position="2"/>
        <end position="75"/>
    </location>
</feature>
<feature type="region of interest" description="Interaction with DDX3X" evidence="9">
    <location>
        <begin position="2"/>
        <end position="59"/>
    </location>
</feature>
<feature type="region of interest" description="Interaction with EIF2AK2/PKR" evidence="2">
    <location>
        <begin position="2"/>
        <end position="58"/>
    </location>
</feature>
<feature type="region of interest" description="Interaction with STAT1" evidence="2">
    <location>
        <begin position="2"/>
        <end position="23"/>
    </location>
</feature>
<feature type="region of interest" description="Important for endoplasmic reticulum and mitochondrial localization" evidence="2">
    <location>
        <begin position="112"/>
        <end position="152"/>
    </location>
</feature>
<feature type="region of interest" description="Interaction with APOA2" evidence="6">
    <location>
        <begin position="122"/>
        <end position="173"/>
    </location>
</feature>
<feature type="region of interest" description="Important for lipid droplets localization" evidence="5">
    <location>
        <begin position="164"/>
        <end position="167"/>
    </location>
</feature>
<feature type="region of interest" description="Important for fusion" evidence="5">
    <location>
        <begin position="265"/>
        <end position="296"/>
    </location>
</feature>
<feature type="region of interest" description="HVR1" evidence="5">
    <location>
        <begin position="385"/>
        <end position="412"/>
    </location>
</feature>
<feature type="region of interest" description="HVR2" evidence="5">
    <location>
        <begin position="475"/>
        <end position="480"/>
    </location>
</feature>
<feature type="region of interest" description="CD81-binding 1" evidence="3">
    <location>
        <begin position="482"/>
        <end position="495"/>
    </location>
</feature>
<feature type="region of interest" description="CD81-binding 2" evidence="3">
    <location>
        <begin position="546"/>
        <end position="553"/>
    </location>
</feature>
<feature type="region of interest" description="PKR/eIF2-alpha phosphorylation homology domain (PePHD)">
    <location>
        <begin position="664"/>
        <end position="675"/>
    </location>
</feature>
<feature type="region of interest" description="Protease NS2-3" evidence="3">
    <location>
        <begin position="908"/>
        <end position="1210"/>
    </location>
</feature>
<feature type="region of interest" description="Interaction with host SCPS1" evidence="11">
    <location>
        <begin position="933"/>
        <end position="953"/>
    </location>
</feature>
<feature type="region of interest" description="RNA-binding" evidence="3">
    <location>
        <begin position="1490"/>
        <end position="1502"/>
    </location>
</feature>
<feature type="region of interest" description="NS3-binding" evidence="5">
    <location>
        <begin position="1683"/>
        <end position="1694"/>
    </location>
</feature>
<feature type="region of interest" description="Transcriptional activation" evidence="13">
    <location>
        <begin position="2124"/>
        <end position="2336"/>
    </location>
</feature>
<feature type="region of interest" description="FKBP8-binding" evidence="2">
    <location>
        <begin position="2124"/>
        <end position="2212"/>
    </location>
</feature>
<feature type="region of interest" description="Interaction with non-structural protein 4A" evidence="2">
    <location>
        <begin position="2139"/>
        <end position="2143"/>
    </location>
</feature>
<feature type="region of interest" description="Interaction with host SKP2" evidence="5">
    <location>
        <begin position="2193"/>
        <end position="2464"/>
    </location>
</feature>
<feature type="region of interest" description="Interaction with EIF2AK2/PKR" evidence="3">
    <location>
        <begin position="2214"/>
        <end position="2279"/>
    </location>
</feature>
<feature type="region of interest" description="ISDR" evidence="2">
    <location>
        <begin position="2214"/>
        <end position="2253"/>
    </location>
</feature>
<feature type="region of interest" description="NS4B-binding" evidence="13">
    <location>
        <begin position="2253"/>
        <end position="2310"/>
    </location>
</feature>
<feature type="region of interest" description="V3">
    <location>
        <begin position="2303"/>
        <end position="2381"/>
    </location>
</feature>
<feature type="region of interest" description="Disordered" evidence="18">
    <location>
        <begin position="2354"/>
        <end position="2434"/>
    </location>
</feature>
<feature type="short sequence motif" description="Nuclear localization signal" evidence="11">
    <location>
        <begin position="5"/>
        <end position="13"/>
    </location>
</feature>
<feature type="short sequence motif" description="Nuclear localization signal" evidence="11">
    <location>
        <begin position="38"/>
        <end position="43"/>
    </location>
</feature>
<feature type="short sequence motif" description="Nuclear localization signal" evidence="11">
    <location>
        <begin position="58"/>
        <end position="64"/>
    </location>
</feature>
<feature type="short sequence motif" description="Nuclear localization signal" evidence="11">
    <location>
        <begin position="66"/>
        <end position="71"/>
    </location>
</feature>
<feature type="short sequence motif" description="DECH box" evidence="11">
    <location>
        <begin position="1320"/>
        <end position="1323"/>
    </location>
</feature>
<feature type="short sequence motif" description="SH3-binding" evidence="13">
    <location>
        <begin position="2326"/>
        <end position="2329"/>
    </location>
</feature>
<feature type="short sequence motif" description="Nuclear localization signal" evidence="2">
    <location>
        <begin position="2331"/>
        <end position="2339"/>
    </location>
</feature>
<feature type="compositionally biased region" description="Basic residues" evidence="18">
    <location>
        <begin position="7"/>
        <end position="16"/>
    </location>
</feature>
<feature type="compositionally biased region" description="Low complexity" evidence="18">
    <location>
        <begin position="32"/>
        <end position="47"/>
    </location>
</feature>
<feature type="compositionally biased region" description="Acidic residues" evidence="18">
    <location>
        <begin position="2402"/>
        <end position="2411"/>
    </location>
</feature>
<feature type="active site" description="For protease NS2 activity; shared with dimeric partner" evidence="16">
    <location>
        <position position="956"/>
    </location>
</feature>
<feature type="active site" description="For protease NS2 activity; shared with dimeric partner" evidence="16">
    <location>
        <position position="976"/>
    </location>
</feature>
<feature type="active site" description="For protease NS2 activity; shared with dimeric partner" evidence="16">
    <location>
        <position position="997"/>
    </location>
</feature>
<feature type="active site" description="Charge relay system; for serine protease NS3 activity" evidence="17">
    <location>
        <position position="1087"/>
    </location>
</feature>
<feature type="active site" description="Charge relay system; for serine protease NS3 activity" evidence="17">
    <location>
        <position position="1111"/>
    </location>
</feature>
<feature type="active site" description="Charge relay system; for serine protease NS3 activity" evidence="17">
    <location>
        <position position="1169"/>
    </location>
</feature>
<feature type="binding site" evidence="17">
    <location>
        <position position="1127"/>
    </location>
    <ligand>
        <name>Zn(2+)</name>
        <dbReference type="ChEBI" id="CHEBI:29105"/>
        <label>1</label>
        <note>structural; for NS3 protease activity and NS2/3 auto-cleavage activity</note>
    </ligand>
</feature>
<feature type="binding site" evidence="17">
    <location>
        <position position="1129"/>
    </location>
    <ligand>
        <name>Zn(2+)</name>
        <dbReference type="ChEBI" id="CHEBI:29105"/>
        <label>1</label>
        <note>structural; for NS3 protease activity and NS2/3 auto-cleavage activity</note>
    </ligand>
</feature>
<feature type="binding site" evidence="17">
    <location>
        <position position="1175"/>
    </location>
    <ligand>
        <name>Zn(2+)</name>
        <dbReference type="ChEBI" id="CHEBI:29105"/>
        <label>1</label>
        <note>structural; for NS3 protease activity and NS2/3 auto-cleavage activity</note>
    </ligand>
</feature>
<feature type="binding site" evidence="17">
    <location>
        <position position="1179"/>
    </location>
    <ligand>
        <name>Zn(2+)</name>
        <dbReference type="ChEBI" id="CHEBI:29105"/>
        <label>1</label>
        <note>structural; for NS3 protease activity and NS2/3 auto-cleavage activity</note>
    </ligand>
</feature>
<feature type="binding site" evidence="15">
    <location>
        <begin position="1234"/>
        <end position="1241"/>
    </location>
    <ligand>
        <name>ATP</name>
        <dbReference type="ChEBI" id="CHEBI:30616"/>
    </ligand>
</feature>
<feature type="binding site" evidence="12">
    <location>
        <position position="1241"/>
    </location>
    <ligand>
        <name>Mg(2+)</name>
        <dbReference type="ChEBI" id="CHEBI:18420"/>
        <label>1</label>
        <note>catalytic; for NS3 helicase activity</note>
    </ligand>
</feature>
<feature type="binding site" evidence="12">
    <location>
        <position position="1321"/>
    </location>
    <ligand>
        <name>Mg(2+)</name>
        <dbReference type="ChEBI" id="CHEBI:18420"/>
        <label>1</label>
        <note>catalytic; for NS3 helicase activity</note>
    </ligand>
</feature>
<feature type="binding site" evidence="12">
    <location>
        <position position="2015"/>
    </location>
    <ligand>
        <name>Zn(2+)</name>
        <dbReference type="ChEBI" id="CHEBI:29105"/>
        <label>2</label>
        <note>structural</note>
    </ligand>
</feature>
<feature type="binding site" evidence="12">
    <location>
        <position position="2033"/>
    </location>
    <ligand>
        <name>Zn(2+)</name>
        <dbReference type="ChEBI" id="CHEBI:29105"/>
        <label>2</label>
        <note>structural</note>
    </ligand>
</feature>
<feature type="binding site" evidence="12">
    <location>
        <position position="2035"/>
    </location>
    <ligand>
        <name>Zn(2+)</name>
        <dbReference type="ChEBI" id="CHEBI:29105"/>
        <label>2</label>
        <note>structural</note>
    </ligand>
</feature>
<feature type="binding site" evidence="12">
    <location>
        <position position="2056"/>
    </location>
    <ligand>
        <name>Zn(2+)</name>
        <dbReference type="ChEBI" id="CHEBI:29105"/>
        <label>2</label>
        <note>structural</note>
    </ligand>
</feature>
<feature type="binding site" evidence="3">
    <location>
        <position position="2666"/>
    </location>
    <ligand>
        <name>Mg(2+)</name>
        <dbReference type="ChEBI" id="CHEBI:18420"/>
        <label>2</label>
        <note>catalytic; for RNA-directed RNA polymerase activity</note>
    </ligand>
</feature>
<feature type="binding site" evidence="3">
    <location>
        <position position="2764"/>
    </location>
    <ligand>
        <name>Mg(2+)</name>
        <dbReference type="ChEBI" id="CHEBI:18420"/>
        <label>2</label>
        <note>catalytic; for RNA-directed RNA polymerase activity</note>
    </ligand>
</feature>
<feature type="binding site" evidence="3">
    <location>
        <position position="2765"/>
    </location>
    <ligand>
        <name>Mg(2+)</name>
        <dbReference type="ChEBI" id="CHEBI:18420"/>
        <label>2</label>
        <note>catalytic; for RNA-directed RNA polymerase activity</note>
    </ligand>
</feature>
<feature type="site" description="Cleavage; by host signal peptide peptidase" evidence="2">
    <location>
        <begin position="177"/>
        <end position="178"/>
    </location>
</feature>
<feature type="site" description="Cleavage; by host signal peptidase" evidence="2">
    <location>
        <begin position="191"/>
        <end position="192"/>
    </location>
</feature>
<feature type="site" description="Cleavage; by host signal peptidase" evidence="2">
    <location>
        <begin position="383"/>
        <end position="384"/>
    </location>
</feature>
<feature type="site" description="Cleavage; by host signal peptidase">
    <location>
        <begin position="750"/>
        <end position="751"/>
    </location>
</feature>
<feature type="site" description="Cleavage; by host signal peptidase">
    <location>
        <begin position="813"/>
        <end position="814"/>
    </location>
</feature>
<feature type="site" description="Cleavage; by protease NS2" evidence="16">
    <location>
        <begin position="1030"/>
        <end position="1031"/>
    </location>
</feature>
<feature type="site" description="Cleavage; by serine protease NS3" evidence="5">
    <location>
        <begin position="1661"/>
        <end position="1662"/>
    </location>
</feature>
<feature type="site" description="Cleavage; by serine protease NS3" evidence="5">
    <location>
        <begin position="1715"/>
        <end position="1716"/>
    </location>
</feature>
<feature type="site" description="Cleavage; by serine protease NS3" evidence="5">
    <location>
        <begin position="1976"/>
        <end position="1977"/>
    </location>
</feature>
<feature type="site" description="Cleavage; by serine protease NS3" evidence="5">
    <location>
        <begin position="2446"/>
        <end position="2447"/>
    </location>
</feature>
<feature type="modified residue" description="N-acetylserine; by host" evidence="10">
    <location>
        <position position="2"/>
    </location>
</feature>
<feature type="modified residue" description="Phosphoserine; by host" evidence="7">
    <location>
        <position position="53"/>
    </location>
</feature>
<feature type="modified residue" description="Phosphoserine; by host" evidence="7">
    <location>
        <position position="99"/>
    </location>
</feature>
<feature type="modified residue" description="Phosphoserine; by host" evidence="7">
    <location>
        <position position="116"/>
    </location>
</feature>
<feature type="modified residue" description="Phosphoserine; by host" evidence="12">
    <location>
        <position position="2198"/>
    </location>
</feature>
<feature type="modified residue" description="Phosphoserine; by host" evidence="12">
    <location>
        <position position="2201"/>
    </location>
</feature>
<feature type="modified residue" description="Phosphoserine; by host" evidence="12">
    <location>
        <position position="2205"/>
    </location>
</feature>
<feature type="modified residue" description="Phosphoserine; by host" evidence="12">
    <location>
        <position position="2208"/>
    </location>
</feature>
<feature type="modified residue" description="Phosphoserine; by host" evidence="11">
    <location>
        <position position="2211"/>
    </location>
</feature>
<feature type="modified residue" description="Phosphoserine; by host" evidence="11">
    <location>
        <position position="2214"/>
    </location>
</feature>
<feature type="modified residue" description="Phosphoserine; by host" evidence="2">
    <location>
        <position position="2475"/>
    </location>
</feature>
<feature type="modified residue" description="Phosphoserine; by host" evidence="2">
    <location>
        <position position="2488"/>
    </location>
</feature>
<feature type="lipid moiety-binding region" description="S-palmitoyl cysteine; by host" evidence="5">
    <location>
        <position position="926"/>
    </location>
</feature>
<feature type="lipid moiety-binding region" description="S-palmitoyl cysteine; by host" evidence="5">
    <location>
        <position position="1976"/>
    </location>
</feature>
<feature type="glycosylation site" description="N-linked (GlcNAc...) asparagine; by host" evidence="5">
    <location>
        <position position="196"/>
    </location>
</feature>
<feature type="glycosylation site" description="N-linked (GlcNAc...) asparagine; by host" evidence="5">
    <location>
        <position position="209"/>
    </location>
</feature>
<feature type="glycosylation site" description="N-linked (GlcNAc...) asparagine; by host" evidence="5">
    <location>
        <position position="234"/>
    </location>
</feature>
<feature type="glycosylation site" description="N-linked (GlcNAc...) asparagine; by host" evidence="5">
    <location>
        <position position="305"/>
    </location>
</feature>
<feature type="glycosylation site" description="N-linked (GlcNAc...) (high mannose) asparagine; by host" evidence="5">
    <location>
        <position position="417"/>
    </location>
</feature>
<feature type="glycosylation site" description="N-linked (GlcNAc...) (high mannose) asparagine; by host" evidence="5">
    <location>
        <position position="423"/>
    </location>
</feature>
<feature type="glycosylation site" description="N-linked (GlcNAc...) (high mannose) asparagine; by host" evidence="5">
    <location>
        <position position="430"/>
    </location>
</feature>
<feature type="glycosylation site" description="N-linked (GlcNAc...) asparagine; by host" evidence="13">
    <location>
        <position position="448"/>
    </location>
</feature>
<feature type="glycosylation site" description="N-linked (GlcNAc...) asparagine; by host" evidence="13">
    <location>
        <position position="534"/>
    </location>
</feature>
<feature type="glycosylation site" description="N-linked (GlcNAc...) asparagine; by host" evidence="13">
    <location>
        <position position="558"/>
    </location>
</feature>
<feature type="glycosylation site" description="N-linked (GlcNAc...) (high mannose) asparagine; by host" evidence="5">
    <location>
        <position position="627"/>
    </location>
</feature>
<feature type="glycosylation site" description="N-linked (GlcNAc...) (high mannose) asparagine; by host" evidence="5">
    <location>
        <position position="649"/>
    </location>
</feature>
<feature type="disulfide bond" evidence="5">
    <location>
        <begin position="429"/>
        <end position="554"/>
    </location>
</feature>
<feature type="disulfide bond" evidence="5">
    <location>
        <begin position="452"/>
        <end position="459"/>
    </location>
</feature>
<feature type="disulfide bond" evidence="5">
    <location>
        <begin position="488"/>
        <end position="496"/>
    </location>
</feature>
<feature type="disulfide bond" evidence="5">
    <location>
        <begin position="505"/>
        <end position="510"/>
    </location>
</feature>
<feature type="disulfide bond" evidence="5">
    <location>
        <begin position="566"/>
        <end position="571"/>
    </location>
</feature>
<feature type="disulfide bond" evidence="5">
    <location>
        <begin position="585"/>
        <end position="589"/>
    </location>
</feature>
<feature type="disulfide bond" evidence="5">
    <location>
        <begin position="601"/>
        <end position="624"/>
    </location>
</feature>
<feature type="disulfide bond" evidence="5">
    <location>
        <begin position="611"/>
        <end position="648"/>
    </location>
</feature>
<feature type="disulfide bond" evidence="5">
    <location>
        <begin position="656"/>
        <end position="681"/>
    </location>
</feature>
<feature type="cross-link" description="Glycyl lysine isopeptide (Lys-Gly) (interchain with G-Cter in ubiquitin)" evidence="5">
    <location>
        <position position="2354"/>
    </location>
</feature>
<keyword id="KW-0007">Acetylation</keyword>
<keyword id="KW-1072">Activation of host autophagy by virus</keyword>
<keyword id="KW-0053">Apoptosis</keyword>
<keyword id="KW-0067">ATP-binding</keyword>
<keyword id="KW-0167">Capsid protein</keyword>
<keyword id="KW-1165">Clathrin-mediated endocytosis of virus by host</keyword>
<keyword id="KW-1015">Disulfide bond</keyword>
<keyword id="KW-1170">Fusion of virus membrane with host endosomal membrane</keyword>
<keyword id="KW-1168">Fusion of virus membrane with host membrane</keyword>
<keyword id="KW-1078">G1/S host cell cycle checkpoint dysregulation by virus</keyword>
<keyword id="KW-0325">Glycoprotein</keyword>
<keyword id="KW-0347">Helicase</keyword>
<keyword id="KW-1032">Host cell membrane</keyword>
<keyword id="KW-1035">Host cytoplasm</keyword>
<keyword id="KW-1038">Host endoplasmic reticulum</keyword>
<keyword id="KW-1041">Host lipid droplet</keyword>
<keyword id="KW-1043">Host membrane</keyword>
<keyword id="KW-1045">Host mitochondrion</keyword>
<keyword id="KW-1048">Host nucleus</keyword>
<keyword id="KW-0945">Host-virus interaction</keyword>
<keyword id="KW-0378">Hydrolase</keyword>
<keyword id="KW-1090">Inhibition of host innate immune response by virus</keyword>
<keyword id="KW-1114">Inhibition of host interferon signaling pathway by virus</keyword>
<keyword id="KW-1097">Inhibition of host MAVS by virus</keyword>
<keyword id="KW-1113">Inhibition of host RLR pathway by virus</keyword>
<keyword id="KW-1105">Inhibition of host STAT1 by virus</keyword>
<keyword id="KW-1110">Inhibition of host TRAFs by virus</keyword>
<keyword id="KW-0922">Interferon antiviral system evasion</keyword>
<keyword id="KW-0407">Ion channel</keyword>
<keyword id="KW-0406">Ion transport</keyword>
<keyword id="KW-1017">Isopeptide bond</keyword>
<keyword id="KW-0449">Lipoprotein</keyword>
<keyword id="KW-0460">Magnesium</keyword>
<keyword id="KW-0472">Membrane</keyword>
<keyword id="KW-0479">Metal-binding</keyword>
<keyword id="KW-1121">Modulation of host cell cycle by virus</keyword>
<keyword id="KW-0511">Multifunctional enzyme</keyword>
<keyword id="KW-0547">Nucleotide-binding</keyword>
<keyword id="KW-0548">Nucleotidyltransferase</keyword>
<keyword id="KW-0553">Oncogene</keyword>
<keyword id="KW-0564">Palmitate</keyword>
<keyword id="KW-0597">Phosphoprotein</keyword>
<keyword id="KW-0645">Protease</keyword>
<keyword id="KW-0687">Ribonucleoprotein</keyword>
<keyword id="KW-0694">RNA-binding</keyword>
<keyword id="KW-0696">RNA-directed RNA polymerase</keyword>
<keyword id="KW-0720">Serine protease</keyword>
<keyword id="KW-0729">SH3-binding</keyword>
<keyword id="KW-0788">Thiol protease</keyword>
<keyword id="KW-0804">Transcription</keyword>
<keyword id="KW-0805">Transcription regulation</keyword>
<keyword id="KW-0808">Transferase</keyword>
<keyword id="KW-0812">Transmembrane</keyword>
<keyword id="KW-1133">Transmembrane helix</keyword>
<keyword id="KW-0813">Transport</keyword>
<keyword id="KW-0832">Ubl conjugation</keyword>
<keyword id="KW-1161">Viral attachment to host cell</keyword>
<keyword id="KW-0261">Viral envelope protein</keyword>
<keyword id="KW-0899">Viral immunoevasion</keyword>
<keyword id="KW-1182">Viral ion channel</keyword>
<keyword id="KW-0543">Viral nucleoprotein</keyword>
<keyword id="KW-1162">Viral penetration into host cytoplasm</keyword>
<keyword id="KW-0693">Viral RNA replication</keyword>
<keyword id="KW-0946">Virion</keyword>
<keyword id="KW-1164">Virus endocytosis by host</keyword>
<keyword id="KW-1160">Virus entry into host cell</keyword>
<keyword id="KW-0862">Zinc</keyword>
<sequence length="3037" mass="329405">MSTNPKPQRKTKRNTNRRPQDVKFPGGGQIVGGVYLLPRRGPRLGVRAARKTSERSQPRGRRQPIPKDRRSTGKSWGRPGYPWPLYRNEGLGWAGWLLSPRGSRPSWGPSDPRHKSRNLGKVIDTLTCGFADLMGYIPVVGAPVGGVARALAHGVRVLEDGINYATGNLPGCSFSIFLLALLSCISVPVSAVEVRNTSSSYMATNDCSNSSIVWQLEGAVLHTPGCVPCEKTGNKSRCWVPVTPNIAINQPGALTKGLRAHIDVIVMSATLCSALYVGDVCGALMIAAQVVVVSPQHHHFVQECNCSIYPGKITGHRMAWDMMMNWSPTTTMLLAYLVRIPEVVLDIITGGHWGVMFGLAYFSMQGAWAKVVVILLLTAGVEASTYTTGAVVGRSTHLFTSMFSLGSQQRVQLIHTNGSWHINRTALNCNDSLETGFLAALFYTSSFNSSGCPERLAACRSIESFRIGWGSLEYEESVTNDADMRPYCWHYPPRPCGIVPARTVCGPVYCFTPSPVVVGTTDRAGAPTYNWGENETDVFLLNSTRPPKGAWFGCTWMNGTGFTKTCGAPPCRIRKDFNASEDLLCPTDCFRKHPGATYIKCGAGPWLTPRCLVDYPYRLWHYPCTVNYTIYKVRMFVGGIEHRLQAACNFTRGDRCNLEDRDRSQLSPLLHSTTEWAILPCSYTDLPALSTGLLHLHQNIVDVQYLYGLSPAITKYVVKWEWVVLLFLLLADARVCACLWMLLLLGQAEAALEKLVILHAASAASSNGLLYFILFFVAAWCIKGRAVPMVTYTLLGCWSFVLLLMALPHQAYALDAAEQGQIGMALLIAITAFTITPAYKILLSRCLWWTCYMLVLAEALIQDWIPPLQARGGRDGVIWAMTMFYPGVVFDITKWLLAILGPGYLFRAAVMRTPYFVRANALLRMCALVKQLAGGKYVQVALITLGKWTGTYIYDHLSPMSDWAADGLRDLAVAVEPIVFSPMERKVIVWGAETTACGDIIHGLPVSARLGQEVLLGPADGYTSKGWRLLAPITAYAQQTRGLLSAIVVSMTGRDKTDQAGEIQVLSTVTQSFLGTSISGVLWTVFHGAGNKTLAGSRGPVTQMYSSAEGDLVGWPSPPGTRSLEPCTCGAVDLYLVTRNADVIPARRRGDRRGALLSPRPLSSLKGSSGGPVLCPRGHAVGIFRAAVCSRGVAKSIDFIPVESLDVVTRSPNFTDNSTPPAVPQTYQVGYLHAPTGSGKSTKVPAAYAAQGYKVLVLNPSVAATLGFGAYMSKAYGINPNIRTGVRTVTTGDAITYSTYGKFLADGGCSGGAYDVIICDECHSVDSTTILGIGTVLDQAETAGVRLTVLATATPPGSVTTPHPNIEEVALGHEGEIPFYGKAIPLSAIKGGRHLIFCHSKKKCDELAVALRGMGLNAVAYYRGLDVSIIPTQGDVVVVATDALMTGYTGDFDSVIDCNVAVTQVVDFSLDPTFTITTQTVPQDSVSRSQRRGRTGRGRLGIYRYVSSGERASGMFDTVVLCECYDAGAAWYELTPAETTVRLRAYFNTPGLPVCQDHLEFWEAVFTGLTHIDAHFLSQTKQAGEGFPYLVAYQATVCARAKAPPPSWDVMWKCLIRLKPTLVGPTPLLYRLGSVTNEVTLTHPVTKYIATCMQADLEIMTSTWVLAGGVLAAVAAYCLATGCVSIIGRIHVNQKTIIAPDKEVLYEAFDEMEECASRTALIEEGHRIAEMLKSKIQGLMQQASKQAQGVQPAVQATWPKLEQFWAKHMWNFISGIQYLAGLSTLPGNPAVASMMSFSAALTSPLSTSTTILLNIMGGWLASQIAPPAGATGFVVSGLVGAAVGSIGLGKILVDVLAGYGAGISGALVAFKIMSGEKPSVEDVVNLLPAILSPGALVVGVICAAILRRHVGQGEGAVQWMNRLIAFASRGNHVAPTHYVAESDASQRVTQLLGSLTITSLLRRLHQWITEDCPVPCSGSWLRDVWDWVCSILIDFKNWLSAKLFPRLPGIPFISCQKGYRGTWAGTGIMTTRCPCGANITGNVRLGTMRISGPKTCLNTWQGTFPINCYTEGSCVPKPAPNFKTAIWRVAASEYAEVTQHDSHAYVTGLTADNLKVPCQLPCPEFFSWVDGVQIHRFAPTPKAFMRDEVSFSVGLNSYVVGSQLPCEPEPDTEVLASMLTDPSHITAEAAARRLARGSPPSAASSSASQLSAPSLRATCTTHAKCPDIDMVDANLFCWCTMGGNMTRIESESKVLMVDSFDPVVDKEDEREPSIPSEYLLPKSRFPPALPPWARPDYNPPLLETWKRPDYQPPVVAGCALPPPGTTPVPPPRRRRAVVLDQSNVGEALKELAIKSFGCPPPSGDPGHSTGGGTTGETSKSPPDEPDDSEAGSVSSMPPLEGEPGDPDLEPEQVEHPAPPQEGGAAPGSDSGSWSTCSDVDDSVVCCSMSYSWTGALITPCSPEEEKLPINPLSNSLLRYHNKVYCTTSRSASQRAKKVTFDRVQLLDSHYESVLKDVKQAATKVSAKLLSIEEACALTPPHSARSKYGFGAKEVRSLSRRAVDHIKSVWEDLLEDHCSPIDTTIMAKNEVFCVDPTKGGKKPARLIVYPDLGVRVCEKMALYDITQKLPVAVMGQSYGFQYSPAQRVDFLLQAWKEKKTPMGFSYDTRCFDSTVTERDIRTEESIYLSCSLPEEARTAIHSLTERLYVGGPMTNSKGQSCGYRRCRASGVLTTSMGNTLTCYVKAKAACNAAGIVAPTMLVCGDDLVVISESQGVEEDERNLRVFTEAMTRYSAPPGDPPKAEYDLELITSCSSNVSVALDPRGRRRYYLTRDPTTPLARAAWETARHSPVNSWLGNIIQYAPTVWVRMVLMTHFFSVLMAQDTLDQDLNFEMYGAVYSVSPLDLPAIIERLHGLEAFSLHSYSPHELTRVAAALRKLGAPPLRAWKSRARAVRASLISRGGSAATCGRYLFNWAVRTKLKLTPLPAARLLDLSSWFTVSAGGGDIYHSVSRARPRLLLLGLLLLCVGVGIFLLPAR</sequence>